<dbReference type="EMBL" id="FO680660">
    <property type="status" value="NOT_ANNOTATED_CDS"/>
    <property type="molecule type" value="Genomic_DNA"/>
</dbReference>
<dbReference type="EMBL" id="FP326773">
    <property type="status" value="NOT_ANNOTATED_CDS"/>
    <property type="molecule type" value="Genomic_DNA"/>
</dbReference>
<dbReference type="EMBL" id="KC800812">
    <property type="status" value="NOT_ANNOTATED_CDS"/>
    <property type="molecule type" value="Genomic_DNA"/>
</dbReference>
<dbReference type="EMBL" id="AJ298317">
    <property type="protein sequence ID" value="CAC83674.1"/>
    <property type="molecule type" value="mRNA"/>
</dbReference>
<dbReference type="EMBL" id="AJ298318">
    <property type="protein sequence ID" value="CAC83675.1"/>
    <property type="molecule type" value="Genomic_DNA"/>
</dbReference>
<dbReference type="EMBL" id="AJ298319">
    <property type="protein sequence ID" value="CAC83676.1"/>
    <property type="molecule type" value="Genomic_DNA"/>
</dbReference>
<dbReference type="EMBL" id="AF015521">
    <property type="protein sequence ID" value="AAC15950.1"/>
    <property type="status" value="ALT_FRAME"/>
    <property type="molecule type" value="mRNA"/>
</dbReference>
<dbReference type="EMBL" id="X81649">
    <property type="protein sequence ID" value="CAA57309.1"/>
    <property type="molecule type" value="mRNA"/>
</dbReference>
<dbReference type="EMBL" id="AJ001402">
    <property type="protein sequence ID" value="CAA04737.1"/>
    <property type="molecule type" value="mRNA"/>
</dbReference>
<dbReference type="EMBL" id="AJ001403">
    <property type="protein sequence ID" value="CAA04738.1"/>
    <property type="molecule type" value="Genomic_DNA"/>
</dbReference>
<dbReference type="EMBL" id="U06711">
    <property type="protein sequence ID" value="AAA18431.1"/>
    <property type="status" value="ALT_SEQ"/>
    <property type="molecule type" value="mRNA"/>
</dbReference>
<dbReference type="EMBL" id="Z48314">
    <property type="protein sequence ID" value="CAA88307.1"/>
    <property type="status" value="ALT_FRAME"/>
    <property type="molecule type" value="mRNA"/>
</dbReference>
<dbReference type="EMBL" id="BC033831">
    <property type="protein sequence ID" value="AAH33831.1"/>
    <property type="molecule type" value="mRNA"/>
</dbReference>
<dbReference type="EMBL" id="AL833060">
    <property type="protein sequence ID" value="CAH56330.1"/>
    <property type="status" value="ALT_FRAME"/>
    <property type="molecule type" value="mRNA"/>
</dbReference>
<dbReference type="CCDS" id="CCDS76369.1"/>
<dbReference type="PIR" id="A33811">
    <property type="entry name" value="A33811"/>
</dbReference>
<dbReference type="PIR" id="JE0095">
    <property type="entry name" value="JE0095"/>
</dbReference>
<dbReference type="RefSeq" id="NP_001291288.1">
    <property type="nucleotide sequence ID" value="NM_001304359.2"/>
</dbReference>
<dbReference type="PDB" id="5AJN">
    <property type="method" value="X-ray"/>
    <property type="resolution" value="1.67 A"/>
    <property type="chains" value="P=4254-4268"/>
</dbReference>
<dbReference type="PDB" id="5AJO">
    <property type="method" value="X-ray"/>
    <property type="resolution" value="1.48 A"/>
    <property type="chains" value="B=2528-2543"/>
</dbReference>
<dbReference type="PDB" id="5AJP">
    <property type="method" value="X-ray"/>
    <property type="resolution" value="1.65 A"/>
    <property type="chains" value="B=2528-2543"/>
</dbReference>
<dbReference type="PDB" id="8OV0">
    <property type="method" value="X-ray"/>
    <property type="resolution" value="1.70 A"/>
    <property type="chains" value="A=3518-3626"/>
</dbReference>
<dbReference type="PDB" id="8QSP">
    <property type="method" value="EM"/>
    <property type="resolution" value="3.69 A"/>
    <property type="chains" value="A/B/C/D=901-1366"/>
</dbReference>
<dbReference type="PDB" id="8QTB">
    <property type="method" value="EM"/>
    <property type="resolution" value="2.94 A"/>
    <property type="chains" value="A/B=799-1486"/>
</dbReference>
<dbReference type="PDB" id="8QTV">
    <property type="method" value="EM"/>
    <property type="resolution" value="3.25 A"/>
    <property type="chains" value="A/B=799-1486"/>
</dbReference>
<dbReference type="PDB" id="8R1U">
    <property type="method" value="EM"/>
    <property type="resolution" value="3.19 A"/>
    <property type="chains" value="A/B=901-1367"/>
</dbReference>
<dbReference type="PDB" id="8R1Z">
    <property type="method" value="EM"/>
    <property type="resolution" value="3.20 A"/>
    <property type="chains" value="A/B=901-1367"/>
</dbReference>
<dbReference type="PDB" id="8UI6">
    <property type="method" value="X-ray"/>
    <property type="resolution" value="2.65 A"/>
    <property type="chains" value="B=4566-4581"/>
</dbReference>
<dbReference type="PDB" id="8UJF">
    <property type="method" value="X-ray"/>
    <property type="resolution" value="2.87 A"/>
    <property type="chains" value="E=4566-4581"/>
</dbReference>
<dbReference type="PDB" id="8V9Q">
    <property type="method" value="X-ray"/>
    <property type="resolution" value="2.29 A"/>
    <property type="chains" value="D/F/H=4566-4581"/>
</dbReference>
<dbReference type="PDB" id="9GVJ">
    <property type="method" value="EM"/>
    <property type="resolution" value="2.91 A"/>
    <property type="chains" value="A/B/C/D=28-1483"/>
</dbReference>
<dbReference type="PDB" id="9GVQ">
    <property type="method" value="EM"/>
    <property type="resolution" value="3.90 A"/>
    <property type="chains" value="A/B/C/D=28-1483"/>
</dbReference>
<dbReference type="PDBsum" id="5AJN"/>
<dbReference type="PDBsum" id="5AJO"/>
<dbReference type="PDBsum" id="5AJP"/>
<dbReference type="PDBsum" id="8OV0"/>
<dbReference type="PDBsum" id="8QSP"/>
<dbReference type="PDBsum" id="8QTB"/>
<dbReference type="PDBsum" id="8QTV"/>
<dbReference type="PDBsum" id="8R1U"/>
<dbReference type="PDBsum" id="8R1Z"/>
<dbReference type="PDBsum" id="8UI6"/>
<dbReference type="PDBsum" id="8UJF"/>
<dbReference type="PDBsum" id="8V9Q"/>
<dbReference type="PDBsum" id="9GVJ"/>
<dbReference type="PDBsum" id="9GVQ"/>
<dbReference type="EMDB" id="EMD-18638"/>
<dbReference type="EMDB" id="EMD-18648"/>
<dbReference type="EMDB" id="EMD-18654"/>
<dbReference type="EMDB" id="EMD-18828"/>
<dbReference type="EMDB" id="EMD-18829"/>
<dbReference type="EMDB" id="EMD-51636"/>
<dbReference type="EMDB" id="EMD-51639"/>
<dbReference type="SMR" id="P98088"/>
<dbReference type="FunCoup" id="P98088">
    <property type="interactions" value="194"/>
</dbReference>
<dbReference type="IntAct" id="P98088">
    <property type="interactions" value="11"/>
</dbReference>
<dbReference type="STRING" id="9606.ENSP00000485659"/>
<dbReference type="ChEMBL" id="CHEMBL3713020"/>
<dbReference type="MEROPS" id="I08.951"/>
<dbReference type="GlyConnect" id="375">
    <property type="glycosylation" value="10 O-Linked glycans"/>
</dbReference>
<dbReference type="GlyCosmos" id="P98088">
    <property type="glycosylation" value="58 sites, 17 glycans"/>
</dbReference>
<dbReference type="GlyGen" id="P98088">
    <property type="glycosylation" value="93 sites, 5 N-linked glycans (6 sites), 18 O-linked glycans (1 site)"/>
</dbReference>
<dbReference type="iPTMnet" id="P98088"/>
<dbReference type="PhosphoSitePlus" id="P98088"/>
<dbReference type="SwissPalm" id="P98088"/>
<dbReference type="BioMuta" id="MUC5AC"/>
<dbReference type="DMDM" id="160370004"/>
<dbReference type="jPOST" id="P98088"/>
<dbReference type="MassIVE" id="P98088"/>
<dbReference type="PaxDb" id="9606-ENSP00000485659"/>
<dbReference type="PeptideAtlas" id="P98088"/>
<dbReference type="ProteomicsDB" id="57789"/>
<dbReference type="Pumba" id="P98088"/>
<dbReference type="ABCD" id="P98088">
    <property type="antibodies" value="1 sequenced antibody"/>
</dbReference>
<dbReference type="Antibodypedia" id="3457">
    <property type="antibodies" value="1107 antibodies from 34 providers"/>
</dbReference>
<dbReference type="DNASU" id="4586"/>
<dbReference type="Ensembl" id="ENST00000621226.2">
    <property type="protein sequence ID" value="ENSP00000485659.1"/>
    <property type="gene ID" value="ENSG00000215182.8"/>
</dbReference>
<dbReference type="Ensembl" id="ENST00000707307.1">
    <property type="protein sequence ID" value="ENSP00000516835.1"/>
    <property type="gene ID" value="ENSG00000291363.1"/>
</dbReference>
<dbReference type="GeneID" id="4586"/>
<dbReference type="KEGG" id="hsa:4586"/>
<dbReference type="MANE-Select" id="ENST00000621226.2">
    <property type="protein sequence ID" value="ENSP00000485659.1"/>
    <property type="RefSeq nucleotide sequence ID" value="NM_001304359.2"/>
    <property type="RefSeq protein sequence ID" value="NP_001291288.1"/>
</dbReference>
<dbReference type="UCSC" id="uc031xcx.2">
    <property type="organism name" value="human"/>
</dbReference>
<dbReference type="AGR" id="HGNC:7515"/>
<dbReference type="CTD" id="4586"/>
<dbReference type="DisGeNET" id="4586"/>
<dbReference type="GeneCards" id="MUC5AC"/>
<dbReference type="HGNC" id="HGNC:7515">
    <property type="gene designation" value="MUC5AC"/>
</dbReference>
<dbReference type="HPA" id="ENSG00000215182">
    <property type="expression patterns" value="Tissue enriched (stomach)"/>
</dbReference>
<dbReference type="MIM" id="158373">
    <property type="type" value="gene"/>
</dbReference>
<dbReference type="neXtProt" id="NX_P98088"/>
<dbReference type="OpenTargets" id="ENSG00000215182"/>
<dbReference type="VEuPathDB" id="HostDB:ENSG00000215182"/>
<dbReference type="eggNOG" id="KOG1216">
    <property type="taxonomic scope" value="Eukaryota"/>
</dbReference>
<dbReference type="GeneTree" id="ENSGT00940000156076"/>
<dbReference type="HOGENOM" id="CLU_000076_3_1_1"/>
<dbReference type="InParanoid" id="P98088"/>
<dbReference type="OMA" id="FCEKPIN"/>
<dbReference type="OrthoDB" id="10071893at2759"/>
<dbReference type="PAN-GO" id="P98088">
    <property type="GO annotations" value="2 GO annotations based on evolutionary models"/>
</dbReference>
<dbReference type="PathwayCommons" id="P98088"/>
<dbReference type="Reactome" id="R-HSA-5083625">
    <property type="pathway name" value="Defective GALNT3 causes HFTC"/>
</dbReference>
<dbReference type="Reactome" id="R-HSA-5083632">
    <property type="pathway name" value="Defective C1GALT1C1 causes TNPS"/>
</dbReference>
<dbReference type="Reactome" id="R-HSA-5083636">
    <property type="pathway name" value="Defective GALNT12 causes CRCS1"/>
</dbReference>
<dbReference type="Reactome" id="R-HSA-5621480">
    <property type="pathway name" value="Dectin-2 family"/>
</dbReference>
<dbReference type="Reactome" id="R-HSA-913709">
    <property type="pathway name" value="O-linked glycosylation of mucins"/>
</dbReference>
<dbReference type="Reactome" id="R-HSA-977068">
    <property type="pathway name" value="Termination of O-glycan biosynthesis"/>
</dbReference>
<dbReference type="SignaLink" id="P98088"/>
<dbReference type="BioGRID-ORCS" id="4586">
    <property type="hits" value="5 hits in 198 CRISPR screens"/>
</dbReference>
<dbReference type="GenomeRNAi" id="4586"/>
<dbReference type="Pharos" id="P98088">
    <property type="development level" value="Tbio"/>
</dbReference>
<dbReference type="PRO" id="PR:P98088"/>
<dbReference type="Proteomes" id="UP000005640">
    <property type="component" value="Chromosome 11"/>
</dbReference>
<dbReference type="RNAct" id="P98088">
    <property type="molecule type" value="protein"/>
</dbReference>
<dbReference type="Bgee" id="ENSG00000215182">
    <property type="expression patterns" value="Expressed in olfactory segment of nasal mucosa and 41 other cell types or tissues"/>
</dbReference>
<dbReference type="GO" id="GO:0070062">
    <property type="term" value="C:extracellular exosome"/>
    <property type="evidence" value="ECO:0007005"/>
    <property type="project" value="UniProtKB"/>
</dbReference>
<dbReference type="GO" id="GO:0031012">
    <property type="term" value="C:extracellular matrix"/>
    <property type="evidence" value="ECO:0000318"/>
    <property type="project" value="GO_Central"/>
</dbReference>
<dbReference type="GO" id="GO:0005615">
    <property type="term" value="C:extracellular space"/>
    <property type="evidence" value="ECO:0000314"/>
    <property type="project" value="UniProtKB"/>
</dbReference>
<dbReference type="GO" id="GO:0005796">
    <property type="term" value="C:Golgi lumen"/>
    <property type="evidence" value="ECO:0000304"/>
    <property type="project" value="Reactome"/>
</dbReference>
<dbReference type="GO" id="GO:0070701">
    <property type="term" value="C:mucus layer"/>
    <property type="evidence" value="ECO:0000314"/>
    <property type="project" value="MGI"/>
</dbReference>
<dbReference type="GO" id="GO:0005886">
    <property type="term" value="C:plasma membrane"/>
    <property type="evidence" value="ECO:0000304"/>
    <property type="project" value="Reactome"/>
</dbReference>
<dbReference type="GO" id="GO:0005201">
    <property type="term" value="F:extracellular matrix structural constituent"/>
    <property type="evidence" value="ECO:0000304"/>
    <property type="project" value="UniProtKB"/>
</dbReference>
<dbReference type="GO" id="GO:0046872">
    <property type="term" value="F:metal ion binding"/>
    <property type="evidence" value="ECO:0007669"/>
    <property type="project" value="UniProtKB-KW"/>
</dbReference>
<dbReference type="CDD" id="cd19941">
    <property type="entry name" value="TIL"/>
    <property type="match status" value="3"/>
</dbReference>
<dbReference type="FunFam" id="2.10.25.10:FF:000153">
    <property type="entry name" value="MUC5B isoform 1"/>
    <property type="match status" value="1"/>
</dbReference>
<dbReference type="FunFam" id="2.10.25.10:FF:000674">
    <property type="entry name" value="Mucin-2"/>
    <property type="match status" value="1"/>
</dbReference>
<dbReference type="FunFam" id="2.10.25.10:FF:000414">
    <property type="entry name" value="von Willebrand factor"/>
    <property type="match status" value="1"/>
</dbReference>
<dbReference type="Gene3D" id="2.10.25.10">
    <property type="entry name" value="Laminin"/>
    <property type="match status" value="4"/>
</dbReference>
<dbReference type="InterPro" id="IPR006207">
    <property type="entry name" value="Cys_knot_C"/>
</dbReference>
<dbReference type="InterPro" id="IPR050780">
    <property type="entry name" value="Mucin_vWF_Thrombospondin_sf"/>
</dbReference>
<dbReference type="InterPro" id="IPR036084">
    <property type="entry name" value="Ser_inhib-like_sf"/>
</dbReference>
<dbReference type="InterPro" id="IPR002919">
    <property type="entry name" value="TIL_dom"/>
</dbReference>
<dbReference type="InterPro" id="IPR014853">
    <property type="entry name" value="VWF/SSPO/ZAN-like_Cys-rich_dom"/>
</dbReference>
<dbReference type="InterPro" id="IPR001007">
    <property type="entry name" value="VWF_dom"/>
</dbReference>
<dbReference type="InterPro" id="IPR001846">
    <property type="entry name" value="VWF_type-D"/>
</dbReference>
<dbReference type="InterPro" id="IPR025155">
    <property type="entry name" value="WxxW_domain"/>
</dbReference>
<dbReference type="PANTHER" id="PTHR11339">
    <property type="entry name" value="EXTRACELLULAR MATRIX GLYCOPROTEIN RELATED"/>
    <property type="match status" value="1"/>
</dbReference>
<dbReference type="PANTHER" id="PTHR11339:SF401">
    <property type="entry name" value="MUCIN-5AC"/>
    <property type="match status" value="1"/>
</dbReference>
<dbReference type="Pfam" id="PF08742">
    <property type="entry name" value="C8"/>
    <property type="match status" value="4"/>
</dbReference>
<dbReference type="Pfam" id="PF13330">
    <property type="entry name" value="Mucin2_WxxW"/>
    <property type="match status" value="9"/>
</dbReference>
<dbReference type="Pfam" id="PF01826">
    <property type="entry name" value="TIL"/>
    <property type="match status" value="2"/>
</dbReference>
<dbReference type="Pfam" id="PF00094">
    <property type="entry name" value="VWD"/>
    <property type="match status" value="4"/>
</dbReference>
<dbReference type="SMART" id="SM00832">
    <property type="entry name" value="C8"/>
    <property type="match status" value="4"/>
</dbReference>
<dbReference type="SMART" id="SM00041">
    <property type="entry name" value="CT"/>
    <property type="match status" value="1"/>
</dbReference>
<dbReference type="SMART" id="SM00214">
    <property type="entry name" value="VWC"/>
    <property type="match status" value="6"/>
</dbReference>
<dbReference type="SMART" id="SM00215">
    <property type="entry name" value="VWC_out"/>
    <property type="match status" value="2"/>
</dbReference>
<dbReference type="SMART" id="SM00216">
    <property type="entry name" value="VWD"/>
    <property type="match status" value="4"/>
</dbReference>
<dbReference type="SUPFAM" id="SSF57603">
    <property type="entry name" value="FnI-like domain"/>
    <property type="match status" value="1"/>
</dbReference>
<dbReference type="SUPFAM" id="SSF57567">
    <property type="entry name" value="Serine protease inhibitors"/>
    <property type="match status" value="4"/>
</dbReference>
<dbReference type="PROSITE" id="PS01185">
    <property type="entry name" value="CTCK_1"/>
    <property type="match status" value="1"/>
</dbReference>
<dbReference type="PROSITE" id="PS01225">
    <property type="entry name" value="CTCK_2"/>
    <property type="match status" value="1"/>
</dbReference>
<dbReference type="PROSITE" id="PS01208">
    <property type="entry name" value="VWFC_1"/>
    <property type="match status" value="2"/>
</dbReference>
<dbReference type="PROSITE" id="PS50184">
    <property type="entry name" value="VWFC_2"/>
    <property type="match status" value="2"/>
</dbReference>
<dbReference type="PROSITE" id="PS51233">
    <property type="entry name" value="VWFD"/>
    <property type="match status" value="4"/>
</dbReference>
<evidence type="ECO:0000250" key="1">
    <source>
        <dbReference type="UniProtKB" id="Q02817"/>
    </source>
</evidence>
<evidence type="ECO:0000250" key="2">
    <source>
        <dbReference type="UniProtKB" id="Q9HC84"/>
    </source>
</evidence>
<evidence type="ECO:0000255" key="3"/>
<evidence type="ECO:0000255" key="4">
    <source>
        <dbReference type="PROSITE-ProRule" id="PRU00039"/>
    </source>
</evidence>
<evidence type="ECO:0000255" key="5">
    <source>
        <dbReference type="PROSITE-ProRule" id="PRU00220"/>
    </source>
</evidence>
<evidence type="ECO:0000255" key="6">
    <source>
        <dbReference type="PROSITE-ProRule" id="PRU00580"/>
    </source>
</evidence>
<evidence type="ECO:0000256" key="7">
    <source>
        <dbReference type="SAM" id="MobiDB-lite"/>
    </source>
</evidence>
<evidence type="ECO:0000269" key="8">
    <source>
    </source>
</evidence>
<evidence type="ECO:0000269" key="9">
    <source>
    </source>
</evidence>
<evidence type="ECO:0000269" key="10">
    <source>
    </source>
</evidence>
<evidence type="ECO:0000269" key="11">
    <source>
    </source>
</evidence>
<evidence type="ECO:0000269" key="12">
    <source>
    </source>
</evidence>
<evidence type="ECO:0000269" key="13">
    <source>
    </source>
</evidence>
<evidence type="ECO:0000269" key="14">
    <source>
    </source>
</evidence>
<evidence type="ECO:0000269" key="15">
    <source>
    </source>
</evidence>
<evidence type="ECO:0000303" key="16">
    <source>
    </source>
</evidence>
<evidence type="ECO:0000303" key="17">
    <source>
    </source>
</evidence>
<evidence type="ECO:0000303" key="18">
    <source>
    </source>
</evidence>
<evidence type="ECO:0000303" key="19">
    <source>
    </source>
</evidence>
<evidence type="ECO:0000303" key="20">
    <source>
    </source>
</evidence>
<evidence type="ECO:0000303" key="21">
    <source>
    </source>
</evidence>
<evidence type="ECO:0000305" key="22"/>
<evidence type="ECO:0000312" key="23">
    <source>
        <dbReference type="HGNC" id="HGNC:7515"/>
    </source>
</evidence>
<evidence type="ECO:0007744" key="24">
    <source>
        <dbReference type="PDB" id="5AJN"/>
    </source>
</evidence>
<evidence type="ECO:0007744" key="25">
    <source>
        <dbReference type="PDB" id="5AJO"/>
    </source>
</evidence>
<evidence type="ECO:0007744" key="26">
    <source>
        <dbReference type="PDB" id="5AJP"/>
    </source>
</evidence>
<evidence type="ECO:0007829" key="27">
    <source>
        <dbReference type="PDB" id="8OV0"/>
    </source>
</evidence>
<evidence type="ECO:0007829" key="28">
    <source>
        <dbReference type="PDB" id="9GVJ"/>
    </source>
</evidence>
<reference key="1">
    <citation type="journal article" date="2006" name="Nature">
        <title>Human chromosome 11 DNA sequence and analysis including novel gene identification.</title>
        <authorList>
            <person name="Taylor T.D."/>
            <person name="Noguchi H."/>
            <person name="Totoki Y."/>
            <person name="Toyoda A."/>
            <person name="Kuroki Y."/>
            <person name="Dewar K."/>
            <person name="Lloyd C."/>
            <person name="Itoh T."/>
            <person name="Takeda T."/>
            <person name="Kim D.-W."/>
            <person name="She X."/>
            <person name="Barlow K.F."/>
            <person name="Bloom T."/>
            <person name="Bruford E."/>
            <person name="Chang J.L."/>
            <person name="Cuomo C.A."/>
            <person name="Eichler E."/>
            <person name="FitzGerald M.G."/>
            <person name="Jaffe D.B."/>
            <person name="LaButti K."/>
            <person name="Nicol R."/>
            <person name="Park H.-S."/>
            <person name="Seaman C."/>
            <person name="Sougnez C."/>
            <person name="Yang X."/>
            <person name="Zimmer A.R."/>
            <person name="Zody M.C."/>
            <person name="Birren B.W."/>
            <person name="Nusbaum C."/>
            <person name="Fujiyama A."/>
            <person name="Hattori M."/>
            <person name="Rogers J."/>
            <person name="Lander E.S."/>
            <person name="Sakaki Y."/>
        </authorList>
    </citation>
    <scope>NUCLEOTIDE SEQUENCE [LARGE SCALE GENOMIC DNA]</scope>
</reference>
<reference key="2">
    <citation type="journal article" date="2001" name="Biochem. J.">
        <title>Human mucin gene MUC5AC: organization of its 5'-region and central repetitive region.</title>
        <authorList>
            <person name="Escande F."/>
            <person name="Aubert J.-P."/>
            <person name="Porchet N."/>
            <person name="Buisine M.P."/>
        </authorList>
    </citation>
    <scope>NUCLEOTIDE SEQUENCE [MRNA] OF 1-4589</scope>
    <scope>NUCLEOTIDE SEQUENCE [GENOMIC DNA] OF 3025-4373</scope>
    <scope>NUCLEOTIDE SEQUENCE [GENOMIC DNA] OF 3081-4793</scope>
</reference>
<reference key="3">
    <citation type="journal article" date="1998" name="J. Biol. Chem.">
        <title>Cloning of the amino-terminal and 5'-flanking region of the human MUC5AC mucin gene and transcriptional up-regulation by bacterial exoproducts.</title>
        <authorList>
            <person name="Li D."/>
            <person name="Gallup M."/>
            <person name="Fan N."/>
            <person name="Szymkowski D.E."/>
            <person name="Basbaum C.B."/>
        </authorList>
    </citation>
    <scope>NUCLEOTIDE SEQUENCE [MRNA] OF 1-1104</scope>
    <source>
        <tissue>Trachea</tissue>
    </source>
</reference>
<reference key="4">
    <citation type="journal article" date="1995" name="Biochem. J.">
        <title>Cloning and analysis of human gastric mucin cDNA reveals two types of conserved cysteine-rich domains.</title>
        <authorList>
            <person name="Klomp L.W."/>
            <person name="Van Rens L."/>
            <person name="Strous G.J."/>
        </authorList>
    </citation>
    <scope>NUCLEOTIDE SEQUENCE [MRNA] OF 1005-1854</scope>
</reference>
<reference key="5">
    <citation type="journal article" date="1989" name="J. Biol. Chem.">
        <title>Proteolytic fragmentation and peptide mapping of human carboxyamidomethylated tracheobronchial mucin.</title>
        <authorList>
            <person name="Rose M.C."/>
            <person name="Kaufman B."/>
            <person name="Martin B.M."/>
        </authorList>
    </citation>
    <scope>PROTEIN SEQUENCE OF 1752-1773; 1796-1805; 2125-2146; 2169-2178; 3231-3252; 3273-3284; 3529-3550; 3573-3582; 3962-3983; 4004-4015 AND 4636-4657</scope>
    <source>
        <tissue>Tracheobronchial mucosa</tissue>
    </source>
</reference>
<reference key="6">
    <citation type="journal article" date="1998" name="Biochem. J.">
        <title>Genomic organization of the 3'-region of the human MUC5AC mucin gene: additional evidence for a common ancestral gene for the 11p15.5 mucin gene family.</title>
        <authorList>
            <person name="Buisine M.P."/>
            <person name="Desseyn J.-L."/>
            <person name="Porchet N."/>
            <person name="Degand P."/>
            <person name="Laine A."/>
            <person name="Aubert J.-P."/>
        </authorList>
    </citation>
    <scope>NUCLEOTIDE SEQUENCE [GENOMIC DNA / MRNA] OF 4574-5654</scope>
    <source>
        <tissue>Placenta</tissue>
        <tissue>Trachea</tissue>
    </source>
</reference>
<reference key="7">
    <citation type="journal article" date="1994" name="J. Biol. Chem.">
        <title>Cloning and analysis of cDNA encoding a major airway glycoprotein, human tracheobronchial mucin (MUC5).</title>
        <authorList>
            <person name="Meerzaman D."/>
            <person name="Charles P."/>
            <person name="Daskal E."/>
            <person name="Polymeropoulos M.H."/>
            <person name="Martin B.M."/>
            <person name="Rose M.C."/>
        </authorList>
    </citation>
    <scope>NUCLEOTIDE SEQUENCE [MRNA] OF 4614-5654</scope>
    <scope>PARTIAL PROTEIN SEQUENCE</scope>
    <scope>TISSUE SPECIFICITY</scope>
    <scope>VARIANT LEU-5521</scope>
    <source>
        <tissue>Nasal polyp</tissue>
    </source>
</reference>
<reference key="8">
    <citation type="journal article" date="1995" name="J. Biol. Chem.">
        <title>Characterization of a mucin cDNA clone isolated from HT-29 mucus secreting cells: the 3' end of MUC5AC?</title>
        <authorList>
            <person name="Lesuffleur T."/>
            <person name="Roche F."/>
            <person name="Hill A.S."/>
            <person name="Lacasa M."/>
            <person name="Fox M."/>
            <person name="Swallow D.M."/>
            <person name="Zweibaum A."/>
            <person name="Real F.X."/>
        </authorList>
    </citation>
    <scope>NUCLEOTIDE SEQUENCE [MRNA] OF 4705-5654</scope>
    <scope>VARIANT LEU-5521</scope>
</reference>
<reference key="9">
    <citation type="journal article" date="2006" name="Biochem. J.">
        <title>Cleavage in the GDPH sequence of the C-terminal cysteine-rich part of the human MUC5AC mucin.</title>
        <authorList>
            <person name="Lidell M.E."/>
            <person name="Hansson G.C."/>
        </authorList>
    </citation>
    <scope>PROTEIN SEQUENCE OF 4927-4936</scope>
    <scope>PROTEOLYTIC PROCESSING</scope>
    <scope>MUTAGENESIS OF ASP-4926</scope>
</reference>
<reference key="10">
    <citation type="journal article" date="2004" name="Genome Res.">
        <title>The status, quality, and expansion of the NIH full-length cDNA project: the Mammalian Gene Collection (MGC).</title>
        <authorList>
            <consortium name="The MGC Project Team"/>
        </authorList>
    </citation>
    <scope>NUCLEOTIDE SEQUENCE [LARGE SCALE MRNA] OF 5081-5654</scope>
    <source>
        <tissue>Colon</tissue>
    </source>
</reference>
<reference key="11">
    <citation type="journal article" date="2007" name="BMC Genomics">
        <title>The full-ORF clone resource of the German cDNA consortium.</title>
        <authorList>
            <person name="Bechtel S."/>
            <person name="Rosenfelder H."/>
            <person name="Duda A."/>
            <person name="Schmidt C.P."/>
            <person name="Ernst U."/>
            <person name="Wellenreuther R."/>
            <person name="Mehrle A."/>
            <person name="Schuster C."/>
            <person name="Bahr A."/>
            <person name="Bloecker H."/>
            <person name="Heubner D."/>
            <person name="Hoerlein A."/>
            <person name="Michel G."/>
            <person name="Wedler H."/>
            <person name="Koehrer K."/>
            <person name="Ottenwaelder B."/>
            <person name="Poustka A."/>
            <person name="Wiemann S."/>
            <person name="Schupp I."/>
        </authorList>
    </citation>
    <scope>NUCLEOTIDE SEQUENCE [LARGE SCALE MRNA] OF 5193-5654</scope>
    <scope>VARIANT LEU-5521</scope>
    <source>
        <tissue>Stomach</tissue>
    </source>
</reference>
<reference key="12">
    <citation type="journal article" date="2001" name="Glycobiology">
        <title>In vivo glycosylation of mucin tandem repeats.</title>
        <authorList>
            <person name="Silverman H.S."/>
            <person name="Parry S."/>
            <person name="Sutton-Smith M."/>
            <person name="Burdick M.D."/>
            <person name="McDermott K."/>
            <person name="Reid C.J."/>
            <person name="Batra S.K."/>
            <person name="Morris H.R."/>
            <person name="Hollingsworth M.A."/>
            <person name="Dell A."/>
            <person name="Harris A."/>
        </authorList>
    </citation>
    <scope>STRUCTURE OF O-LINKED CARBOHYDRATES</scope>
</reference>
<reference key="13">
    <citation type="journal article" date="2003" name="Helicobacter">
        <title>The MUC5AC glycoprotein is the primary receptor for Helicobacter pylori in the human stomach.</title>
        <authorList>
            <person name="Van de Bovenkamp J.H."/>
            <person name="Mahdavi J."/>
            <person name="Korteland-Van Male A.M."/>
            <person name="Bueller H.A."/>
            <person name="Einerhand A.W."/>
            <person name="Boren T."/>
            <person name="Dekker J."/>
        </authorList>
    </citation>
    <scope>FUNCTION</scope>
    <scope>TISSUE SPECIFICITY</scope>
    <scope>GLYCOSYLATION</scope>
</reference>
<reference key="14">
    <citation type="journal article" date="2004" name="Glycobiology">
        <title>C-Mannosylation of MUC5AC and MUC5B Cys subdomains.</title>
        <authorList>
            <person name="Perez-Vilar J."/>
            <person name="Randell S.H."/>
            <person name="Boucher R.C."/>
        </authorList>
    </citation>
    <scope>GLYCOSYLATION AT TRP-2122</scope>
    <scope>SUBCELLULAR LOCATION</scope>
    <scope>MUTAGENESIS OF TRP-2122</scope>
</reference>
<reference key="15">
    <citation type="journal article" date="2012" name="Glycobiology">
        <title>UDP-N-acetyl-alpha-D-galactosamine:polypeptide N-acetylgalactosaminyltransferases: completion of the family tree.</title>
        <authorList>
            <person name="Raman J."/>
            <person name="Guan Y."/>
            <person name="Perrine C.L."/>
            <person name="Gerken T.A."/>
            <person name="Tabak L.A."/>
        </authorList>
    </citation>
    <scope>GLYCOSYLATION</scope>
</reference>
<reference key="16">
    <citation type="journal article" date="2019" name="Life. Sci Alliance">
        <title>TMEM16A chloride channel does not drive mucus production.</title>
        <authorList>
            <person name="Simoes F.B."/>
            <person name="Quaresma M.C."/>
            <person name="Clarke L.A."/>
            <person name="Silva I.A."/>
            <person name="Pankonien I."/>
            <person name="Railean V."/>
            <person name="Kmit A."/>
            <person name="Amaral M.D."/>
        </authorList>
    </citation>
    <scope>SUBCELLULAR LOCATION</scope>
    <scope>DEVELOPMENTAL STAGE</scope>
    <scope>INDUCTION</scope>
</reference>
<reference evidence="24 25 26" key="17">
    <citation type="journal article" date="2015" name="Nat. Commun.">
        <title>Dynamic interplay between catalytic and lectin domains of GalNAc-transferases modulates protein O-glycosylation.</title>
        <authorList>
            <person name="Lira-Navarrete E."/>
            <person name="de Las Rivas M."/>
            <person name="Companon I."/>
            <person name="Pallares M.C."/>
            <person name="Kong Y."/>
            <person name="Iglesias-Fernandez J."/>
            <person name="Bernardes G.J."/>
            <person name="Peregrina J.M."/>
            <person name="Rovira C."/>
            <person name="Bernado P."/>
            <person name="Bruscolini P."/>
            <person name="Clausen H."/>
            <person name="Lostao A."/>
            <person name="Corzana F."/>
            <person name="Hurtado-Guerrero R."/>
        </authorList>
    </citation>
    <scope>X-RAY CRYSTALLOGRAPHY (1.48 ANGSTROMS) OF GLYCOPEPTIDE REPEAT IN COMPLEX WITH GALNT2</scope>
    <scope>GLYCOSYLATION AT THR-2395; THR-2405; THR-2451; THR-2461; THR-2531; THR-2541; THR-2571; THR-2581; THR-2699; THR-2709; THR-2883; THR-2893; THR-2979; THR-2989; THR-3067; THR-3077; THR-4224; THR-4234; THR-4296; THR-4306; THR-4320; THR-4330; THR-4376; THR-4386; THR-4440; THR-4450; THR-4480; THR-4490; THR-4512; THR-4522; THR-4568 AND THR-4578</scope>
</reference>
<feature type="signal peptide" evidence="3">
    <location>
        <begin position="1"/>
        <end position="27"/>
    </location>
</feature>
<feature type="chain" id="PRO_0000158957" description="Mucin-5AC" evidence="3">
    <location>
        <begin position="28"/>
        <end position="5654"/>
    </location>
</feature>
<feature type="domain" description="VWFD 1" evidence="6">
    <location>
        <begin position="79"/>
        <end position="249"/>
    </location>
</feature>
<feature type="domain" description="TIL 1" evidence="3">
    <location>
        <begin position="338"/>
        <end position="394"/>
    </location>
</feature>
<feature type="domain" description="VWFC 1" evidence="5">
    <location>
        <begin position="394"/>
        <end position="465"/>
    </location>
</feature>
<feature type="domain" description="VWFD 2" evidence="6">
    <location>
        <begin position="432"/>
        <end position="607"/>
    </location>
</feature>
<feature type="domain" description="TIL 2" evidence="3">
    <location>
        <begin position="704"/>
        <end position="761"/>
    </location>
</feature>
<feature type="domain" description="TIL 3" evidence="3">
    <location>
        <begin position="818"/>
        <end position="863"/>
    </location>
</feature>
<feature type="domain" description="VWFD 3" evidence="6">
    <location>
        <begin position="901"/>
        <end position="1072"/>
    </location>
</feature>
<feature type="repeat" description="Cys-rich subdomain 1">
    <location>
        <begin position="1383"/>
        <end position="1481"/>
    </location>
</feature>
<feature type="repeat" description="Cys-rich subdomain 2">
    <location>
        <begin position="1577"/>
        <end position="1677"/>
    </location>
</feature>
<feature type="repeat" description="Cys-rich subdomain 3">
    <location>
        <begin position="1743"/>
        <end position="1847"/>
    </location>
</feature>
<feature type="repeat" description="Cys-rich subdomain 4">
    <location>
        <begin position="1950"/>
        <end position="2050"/>
    </location>
</feature>
<feature type="repeat" description="Cys-rich subdomain 5">
    <location>
        <begin position="2116"/>
        <end position="2220"/>
    </location>
</feature>
<feature type="repeat" description="Cys-rich subdomain 6">
    <location>
        <begin position="3222"/>
        <end position="3326"/>
    </location>
</feature>
<feature type="repeat" description="Cys-rich subdomain 7">
    <location>
        <begin position="3520"/>
        <end position="3660"/>
    </location>
</feature>
<feature type="repeat" description="Cys-rich subdomain 8">
    <location>
        <begin position="3953"/>
        <end position="4057"/>
    </location>
</feature>
<feature type="repeat" description="Cys-rich subdomain 9">
    <location>
        <begin position="4627"/>
        <end position="4731"/>
    </location>
</feature>
<feature type="domain" description="VWFC 2" evidence="5">
    <location>
        <begin position="4852"/>
        <end position="4918"/>
    </location>
</feature>
<feature type="domain" description="VWFD 4" evidence="6">
    <location>
        <begin position="4919"/>
        <end position="5103"/>
    </location>
</feature>
<feature type="domain" description="VWFC 3" evidence="5">
    <location>
        <begin position="5276"/>
        <end position="5345"/>
    </location>
</feature>
<feature type="domain" description="VWFC 4" evidence="5">
    <location>
        <begin position="5381"/>
        <end position="5448"/>
    </location>
</feature>
<feature type="domain" description="CTCK" evidence="4">
    <location>
        <begin position="5532"/>
        <end position="5620"/>
    </location>
</feature>
<feature type="region of interest" description="Disordered" evidence="7">
    <location>
        <begin position="27"/>
        <end position="49"/>
    </location>
</feature>
<feature type="region of interest" description="Disordered" evidence="7">
    <location>
        <begin position="1336"/>
        <end position="1377"/>
    </location>
</feature>
<feature type="region of interest" description="9 X Cys-rich subdomain repeats">
    <location>
        <begin position="1383"/>
        <end position="4731"/>
    </location>
</feature>
<feature type="region of interest" description="Disordered" evidence="7">
    <location>
        <begin position="1483"/>
        <end position="1575"/>
    </location>
</feature>
<feature type="region of interest" description="Disordered" evidence="7">
    <location>
        <begin position="1688"/>
        <end position="1733"/>
    </location>
</feature>
<feature type="region of interest" description="Disordered" evidence="7">
    <location>
        <begin position="1849"/>
        <end position="1948"/>
    </location>
</feature>
<feature type="region of interest" description="Disordered" evidence="7">
    <location>
        <begin position="2059"/>
        <end position="2110"/>
    </location>
</feature>
<feature type="region of interest" description="Disordered" evidence="7">
    <location>
        <begin position="2224"/>
        <end position="3214"/>
    </location>
</feature>
<feature type="region of interest" description="107 X 8 AA approximate tandem repeats of T-T-S-T-T-S-A-P">
    <location>
        <begin position="2257"/>
        <end position="3200"/>
    </location>
</feature>
<feature type="region of interest" description="Disordered" evidence="7">
    <location>
        <begin position="3329"/>
        <end position="3515"/>
    </location>
</feature>
<feature type="region of interest" description="17 X 8 AA approximate tandem repeats of T-T-S-T-T-S-A-P">
    <location>
        <begin position="3363"/>
        <end position="3498"/>
    </location>
</feature>
<feature type="region of interest" description="Disordered" evidence="7">
    <location>
        <begin position="3628"/>
        <end position="3951"/>
    </location>
</feature>
<feature type="region of interest" description="34 X 8 AA approximate tandem repeats of T-T-S-T-T-S-A-P">
    <location>
        <begin position="3661"/>
        <end position="3931"/>
    </location>
</feature>
<feature type="region of interest" description="Disordered" evidence="7">
    <location>
        <begin position="4060"/>
        <end position="4625"/>
    </location>
</feature>
<feature type="region of interest" description="58 X 8 AA approximate tandem repeats of T-T-S-T-T-S-A-P">
    <location>
        <begin position="4093"/>
        <end position="4595"/>
    </location>
</feature>
<feature type="region of interest" description="Disordered" evidence="7">
    <location>
        <begin position="4830"/>
        <end position="4849"/>
    </location>
</feature>
<feature type="region of interest" description="Disordered" evidence="7">
    <location>
        <begin position="5622"/>
        <end position="5654"/>
    </location>
</feature>
<feature type="compositionally biased region" description="Polar residues" evidence="7">
    <location>
        <begin position="1338"/>
        <end position="1377"/>
    </location>
</feature>
<feature type="compositionally biased region" description="Low complexity" evidence="7">
    <location>
        <begin position="1483"/>
        <end position="1539"/>
    </location>
</feature>
<feature type="compositionally biased region" description="Low complexity" evidence="7">
    <location>
        <begin position="1547"/>
        <end position="1575"/>
    </location>
</feature>
<feature type="compositionally biased region" description="Low complexity" evidence="7">
    <location>
        <begin position="1697"/>
        <end position="1707"/>
    </location>
</feature>
<feature type="compositionally biased region" description="Polar residues" evidence="7">
    <location>
        <begin position="1708"/>
        <end position="1733"/>
    </location>
</feature>
<feature type="compositionally biased region" description="Low complexity" evidence="7">
    <location>
        <begin position="1850"/>
        <end position="1912"/>
    </location>
</feature>
<feature type="compositionally biased region" description="Low complexity" evidence="7">
    <location>
        <begin position="1920"/>
        <end position="1948"/>
    </location>
</feature>
<feature type="compositionally biased region" description="Low complexity" evidence="7">
    <location>
        <begin position="2070"/>
        <end position="2080"/>
    </location>
</feature>
<feature type="compositionally biased region" description="Polar residues" evidence="7">
    <location>
        <begin position="2081"/>
        <end position="2110"/>
    </location>
</feature>
<feature type="compositionally biased region" description="Low complexity" evidence="7">
    <location>
        <begin position="2224"/>
        <end position="2234"/>
    </location>
</feature>
<feature type="compositionally biased region" description="Polar residues" evidence="7">
    <location>
        <begin position="2235"/>
        <end position="2249"/>
    </location>
</feature>
<feature type="compositionally biased region" description="Low complexity" evidence="7">
    <location>
        <begin position="2250"/>
        <end position="3184"/>
    </location>
</feature>
<feature type="compositionally biased region" description="Low complexity" evidence="7">
    <location>
        <begin position="3192"/>
        <end position="3214"/>
    </location>
</feature>
<feature type="compositionally biased region" description="Low complexity" evidence="7">
    <location>
        <begin position="3329"/>
        <end position="3340"/>
    </location>
</feature>
<feature type="compositionally biased region" description="Polar residues" evidence="7">
    <location>
        <begin position="3341"/>
        <end position="3355"/>
    </location>
</feature>
<feature type="compositionally biased region" description="Low complexity" evidence="7">
    <location>
        <begin position="3356"/>
        <end position="3513"/>
    </location>
</feature>
<feature type="compositionally biased region" description="Low complexity" evidence="7">
    <location>
        <begin position="3628"/>
        <end position="3638"/>
    </location>
</feature>
<feature type="compositionally biased region" description="Polar residues" evidence="7">
    <location>
        <begin position="3639"/>
        <end position="3660"/>
    </location>
</feature>
<feature type="compositionally biased region" description="Low complexity" evidence="7">
    <location>
        <begin position="3661"/>
        <end position="3946"/>
    </location>
</feature>
<feature type="compositionally biased region" description="Low complexity" evidence="7">
    <location>
        <begin position="4060"/>
        <end position="4071"/>
    </location>
</feature>
<feature type="compositionally biased region" description="Polar residues" evidence="7">
    <location>
        <begin position="4072"/>
        <end position="4088"/>
    </location>
</feature>
<feature type="compositionally biased region" description="Low complexity" evidence="7">
    <location>
        <begin position="4089"/>
        <end position="4610"/>
    </location>
</feature>
<feature type="compositionally biased region" description="Polar residues" evidence="7">
    <location>
        <begin position="4611"/>
        <end position="4624"/>
    </location>
</feature>
<feature type="binding site" evidence="1">
    <location>
        <position position="198"/>
    </location>
    <ligand>
        <name>Cu(2+)</name>
        <dbReference type="ChEBI" id="CHEBI:29036"/>
    </ligand>
</feature>
<feature type="binding site" evidence="1">
    <location>
        <position position="320"/>
    </location>
    <ligand>
        <name>Cu(2+)</name>
        <dbReference type="ChEBI" id="CHEBI:29036"/>
    </ligand>
</feature>
<feature type="binding site" evidence="1">
    <location>
        <position position="367"/>
    </location>
    <ligand>
        <name>Cu(2+)</name>
        <dbReference type="ChEBI" id="CHEBI:29036"/>
    </ligand>
</feature>
<feature type="site" description="Cleavage">
    <location>
        <begin position="4926"/>
        <end position="4927"/>
    </location>
</feature>
<feature type="glycosylation site" description="N-linked (GlcNAc...) asparagine" evidence="3">
    <location>
        <position position="205"/>
    </location>
</feature>
<feature type="glycosylation site" description="N-linked (GlcNAc...) asparagine" evidence="3">
    <location>
        <position position="258"/>
    </location>
</feature>
<feature type="glycosylation site" description="N-linked (GlcNAc...) asparagine" evidence="3">
    <location>
        <position position="415"/>
    </location>
</feature>
<feature type="glycosylation site" description="N-linked (GlcNAc...) asparagine" evidence="3">
    <location>
        <position position="524"/>
    </location>
</feature>
<feature type="glycosylation site" description="N-linked (GlcNAc...) asparagine" evidence="3">
    <location>
        <position position="1308"/>
    </location>
</feature>
<feature type="glycosylation site" description="C-linked (Man) tryptophan" evidence="22">
    <location>
        <position position="1389"/>
    </location>
</feature>
<feature type="glycosylation site" description="C-linked (Man) tryptophan" evidence="22">
    <location>
        <position position="1584"/>
    </location>
</feature>
<feature type="glycosylation site" description="C-linked (Man) tryptophan" evidence="22">
    <location>
        <position position="1749"/>
    </location>
</feature>
<feature type="glycosylation site" description="C-linked (Man) tryptophan" evidence="22">
    <location>
        <position position="1957"/>
    </location>
</feature>
<feature type="glycosylation site" description="C-linked (Man) tryptophan" evidence="9">
    <location>
        <position position="2122"/>
    </location>
</feature>
<feature type="glycosylation site" description="O-linked (GalNAc) threonine" evidence="12 25">
    <location>
        <position position="2395"/>
    </location>
</feature>
<feature type="glycosylation site" description="O-linked (GalNAc) threonine" evidence="12 25 26">
    <location>
        <position position="2405"/>
    </location>
</feature>
<feature type="glycosylation site" description="O-linked (GalNAc) threonine" evidence="12 25">
    <location>
        <position position="2451"/>
    </location>
</feature>
<feature type="glycosylation site" description="O-linked (GalNAc) threonine" evidence="12 25 26">
    <location>
        <position position="2461"/>
    </location>
</feature>
<feature type="glycosylation site" description="O-linked (GalNAc) threonine" evidence="12 25">
    <location>
        <position position="2531"/>
    </location>
</feature>
<feature type="glycosylation site" description="O-linked (GalNAc) threonine" evidence="12 25 26">
    <location>
        <position position="2541"/>
    </location>
</feature>
<feature type="glycosylation site" description="O-linked (GalNAc) threonine" evidence="12 25">
    <location>
        <position position="2571"/>
    </location>
</feature>
<feature type="glycosylation site" description="O-linked (GalNAc) threonine" evidence="12 25 26">
    <location>
        <position position="2581"/>
    </location>
</feature>
<feature type="glycosylation site" description="O-linked (GalNAc) threonine" evidence="12 25">
    <location>
        <position position="2699"/>
    </location>
</feature>
<feature type="glycosylation site" description="O-linked (GalNAc) threonine" evidence="12 25 26">
    <location>
        <position position="2709"/>
    </location>
</feature>
<feature type="glycosylation site" description="O-linked (GalNAc) threonine" evidence="12 25">
    <location>
        <position position="2883"/>
    </location>
</feature>
<feature type="glycosylation site" description="O-linked (GalNAc) threonine" evidence="12 25 26">
    <location>
        <position position="2893"/>
    </location>
</feature>
<feature type="glycosylation site" description="O-linked (GalNAc) threonine" evidence="12 25">
    <location>
        <position position="2979"/>
    </location>
</feature>
<feature type="glycosylation site" description="O-linked (GalNAc) threonine" evidence="12 25 26">
    <location>
        <position position="2989"/>
    </location>
</feature>
<feature type="glycosylation site" description="O-linked (GalNAc) threonine" evidence="12 25">
    <location>
        <position position="3067"/>
    </location>
</feature>
<feature type="glycosylation site" description="O-linked (GalNAc) threonine" evidence="12 25 26">
    <location>
        <position position="3077"/>
    </location>
</feature>
<feature type="glycosylation site" description="C-linked (Man) tryptophan" evidence="22">
    <location>
        <position position="3228"/>
    </location>
</feature>
<feature type="glycosylation site" description="C-linked (Man) tryptophan" evidence="22">
    <location>
        <position position="3526"/>
    </location>
</feature>
<feature type="glycosylation site" description="N-linked (GlcNAc...) asparagine" evidence="3">
    <location>
        <position position="3774"/>
    </location>
</feature>
<feature type="glycosylation site" description="C-linked (Man) tryptophan" evidence="22">
    <location>
        <position position="3959"/>
    </location>
</feature>
<feature type="glycosylation site" description="O-linked (GalNAc) threonine" evidence="12 25">
    <location>
        <position position="4224"/>
    </location>
</feature>
<feature type="glycosylation site" description="O-linked (GalNAc) threonine" evidence="12 25 26">
    <location>
        <position position="4234"/>
    </location>
</feature>
<feature type="glycosylation site" description="O-linked (GalNAc) threonine" evidence="12 25">
    <location>
        <position position="4296"/>
    </location>
</feature>
<feature type="glycosylation site" description="O-linked (GalNAc) threonine" evidence="12 25 26">
    <location>
        <position position="4306"/>
    </location>
</feature>
<feature type="glycosylation site" description="O-linked (GalNAc) threonine" evidence="12 25">
    <location>
        <position position="4320"/>
    </location>
</feature>
<feature type="glycosylation site" description="O-linked (GalNAc) threonine" evidence="12 25 26">
    <location>
        <position position="4330"/>
    </location>
</feature>
<feature type="glycosylation site" description="O-linked (GalNAc) threonine" evidence="12 25">
    <location>
        <position position="4376"/>
    </location>
</feature>
<feature type="glycosylation site" description="O-linked (GalNAc) threonine" evidence="12 25 26">
    <location>
        <position position="4386"/>
    </location>
</feature>
<feature type="glycosylation site" description="O-linked (GalNAc) threonine" evidence="12 25">
    <location>
        <position position="4440"/>
    </location>
</feature>
<feature type="glycosylation site" description="O-linked (GalNAc) threonine" evidence="12 25 26">
    <location>
        <position position="4450"/>
    </location>
</feature>
<feature type="glycosylation site" description="O-linked (GalNAc) threonine" evidence="12 25">
    <location>
        <position position="4480"/>
    </location>
</feature>
<feature type="glycosylation site" description="O-linked (GalNAc) threonine" evidence="12 25 26">
    <location>
        <position position="4490"/>
    </location>
</feature>
<feature type="glycosylation site" description="O-linked (GalNAc) threonine" evidence="12 25">
    <location>
        <position position="4512"/>
    </location>
</feature>
<feature type="glycosylation site" description="O-linked (GalNAc) threonine" evidence="12 25 26">
    <location>
        <position position="4522"/>
    </location>
</feature>
<feature type="glycosylation site" description="O-linked (GalNAc) threonine" evidence="12 25">
    <location>
        <position position="4568"/>
    </location>
</feature>
<feature type="glycosylation site" description="O-linked (GalNAc) threonine" evidence="12 25 26">
    <location>
        <position position="4578"/>
    </location>
</feature>
<feature type="glycosylation site" description="C-linked (Man) tryptophan" evidence="22">
    <location>
        <position position="4633"/>
    </location>
</feature>
<feature type="glycosylation site" description="N-linked (GlcNAc...) asparagine" evidence="3">
    <location>
        <position position="4869"/>
    </location>
</feature>
<feature type="glycosylation site" description="N-linked (GlcNAc...) asparagine" evidence="3">
    <location>
        <position position="4942"/>
    </location>
</feature>
<feature type="glycosylation site" description="N-linked (GlcNAc...) asparagine" evidence="3">
    <location>
        <position position="5057"/>
    </location>
</feature>
<feature type="glycosylation site" description="N-linked (GlcNAc...) asparagine" evidence="3">
    <location>
        <position position="5093"/>
    </location>
</feature>
<feature type="glycosylation site" description="N-linked (GlcNAc...) asparagine" evidence="3">
    <location>
        <position position="5236"/>
    </location>
</feature>
<feature type="glycosylation site" description="N-linked (GlcNAc...) asparagine" evidence="3">
    <location>
        <position position="5347"/>
    </location>
</feature>
<feature type="glycosylation site" description="N-linked (GlcNAc...) asparagine" evidence="3">
    <location>
        <position position="5377"/>
    </location>
</feature>
<feature type="glycosylation site" description="N-linked (GlcNAc...) asparagine" evidence="3">
    <location>
        <position position="5386"/>
    </location>
</feature>
<feature type="glycosylation site" description="N-linked (GlcNAc...) asparagine" evidence="3">
    <location>
        <position position="5455"/>
    </location>
</feature>
<feature type="glycosylation site" description="N-linked (GlcNAc...) asparagine" evidence="3">
    <location>
        <position position="5528"/>
    </location>
</feature>
<feature type="glycosylation site" description="N-linked (GlcNAc...) asparagine" evidence="3">
    <location>
        <position position="5591"/>
    </location>
</feature>
<feature type="disulfide bond" evidence="6">
    <location>
        <begin position="81"/>
        <end position="211"/>
    </location>
</feature>
<feature type="disulfide bond" evidence="6">
    <location>
        <begin position="103"/>
        <end position="248"/>
    </location>
</feature>
<feature type="disulfide bond" evidence="6">
    <location>
        <begin position="434"/>
        <end position="571"/>
    </location>
</feature>
<feature type="disulfide bond" evidence="6">
    <location>
        <begin position="456"/>
        <end position="606"/>
    </location>
</feature>
<feature type="disulfide bond" evidence="6">
    <location>
        <begin position="478"/>
        <end position="486"/>
    </location>
</feature>
<feature type="disulfide bond" evidence="6">
    <location>
        <begin position="903"/>
        <end position="1036"/>
    </location>
</feature>
<feature type="disulfide bond" evidence="6">
    <location>
        <begin position="925"/>
        <end position="1071"/>
    </location>
</feature>
<feature type="disulfide bond" evidence="6">
    <location>
        <begin position="934"/>
        <end position="1033"/>
    </location>
</feature>
<feature type="disulfide bond" evidence="6">
    <location>
        <begin position="953"/>
        <end position="960"/>
    </location>
</feature>
<feature type="disulfide bond" evidence="6">
    <location>
        <begin position="4921"/>
        <end position="5063"/>
    </location>
</feature>
<feature type="disulfide bond" evidence="6">
    <location>
        <begin position="4943"/>
        <end position="5102"/>
    </location>
</feature>
<feature type="disulfide bond" evidence="6">
    <location>
        <begin position="4967"/>
        <end position="4975"/>
    </location>
</feature>
<feature type="disulfide bond" evidence="4">
    <location>
        <begin position="5532"/>
        <end position="5582"/>
    </location>
</feature>
<feature type="disulfide bond" evidence="4">
    <location>
        <begin position="5546"/>
        <end position="5596"/>
    </location>
</feature>
<feature type="disulfide bond" evidence="4">
    <location>
        <begin position="5557"/>
        <end position="5612"/>
    </location>
</feature>
<feature type="disulfide bond" evidence="4">
    <location>
        <begin position="5561"/>
        <end position="5614"/>
    </location>
</feature>
<feature type="sequence variant" id="VAR_036832" description="In dbSNP:rs1132436." evidence="10 15">
    <original>P</original>
    <variation>L</variation>
    <location>
        <position position="5521"/>
    </location>
</feature>
<feature type="mutagenesis site" description="No binding to mannose-specific lectin. Loss of secretion from the endoplasmic reticulum." evidence="9">
    <original>W</original>
    <variation>A</variation>
    <location>
        <position position="2122"/>
    </location>
</feature>
<feature type="mutagenesis site" description="Abolishes cleavage." evidence="11">
    <original>D</original>
    <variation>A</variation>
    <variation>E</variation>
    <location>
        <position position="4926"/>
    </location>
</feature>
<feature type="sequence conflict" description="In Ref. 3; AAC15950." evidence="22" ref="3">
    <original>G</original>
    <variation>S</variation>
    <location>
        <position position="25"/>
    </location>
</feature>
<feature type="sequence conflict" description="In Ref. 3; AAC15950." evidence="22" ref="3">
    <original>S</original>
    <variation>R</variation>
    <location>
        <position position="221"/>
    </location>
</feature>
<feature type="sequence conflict" description="In Ref. 2; CAC83674 and 3; AAC15950." evidence="22" ref="2 3">
    <original>D</original>
    <variation>E</variation>
    <location>
        <position position="246"/>
    </location>
</feature>
<feature type="sequence conflict" description="In Ref. 2; CAC83674." evidence="22" ref="2">
    <original>G</original>
    <variation>D</variation>
    <location>
        <position position="432"/>
    </location>
</feature>
<feature type="sequence conflict" description="In Ref. 2; CAC83674." evidence="22" ref="2">
    <original>L</original>
    <variation>P</variation>
    <location>
        <position position="549"/>
    </location>
</feature>
<feature type="sequence conflict" description="In Ref. 2; CAC83674." evidence="22" ref="2">
    <original>M</original>
    <variation>V</variation>
    <location>
        <position position="658"/>
    </location>
</feature>
<feature type="sequence conflict" description="In Ref. 3; AAC15950." evidence="22" ref="3">
    <original>T</original>
    <variation>I</variation>
    <location>
        <position position="702"/>
    </location>
</feature>
<feature type="sequence conflict" description="In Ref. 3; AAC15950." evidence="22" ref="3">
    <original>T</original>
    <variation>A</variation>
    <location>
        <position position="716"/>
    </location>
</feature>
<feature type="sequence conflict" description="In Ref. 3; AAC15950." evidence="22" ref="3">
    <original>GD</original>
    <variation>RG</variation>
    <location>
        <begin position="817"/>
        <end position="818"/>
    </location>
</feature>
<feature type="sequence conflict" description="In Ref. 3; AAC15950." evidence="22" ref="3">
    <original>E</original>
    <variation>K</variation>
    <location>
        <position position="869"/>
    </location>
</feature>
<feature type="sequence conflict" description="In Ref. 3; AAC15950." evidence="22" ref="3">
    <original>G</original>
    <variation>R</variation>
    <location>
        <position position="978"/>
    </location>
</feature>
<feature type="sequence conflict" description="In Ref. 2; CAC83674." evidence="22" ref="2">
    <original>R</original>
    <variation>Q</variation>
    <location>
        <position position="996"/>
    </location>
</feature>
<feature type="sequence conflict" description="In Ref. 4; CAA57309." evidence="22" ref="4">
    <original>A</original>
    <variation>R</variation>
    <location>
        <position position="1141"/>
    </location>
</feature>
<feature type="sequence conflict" description="In Ref. 4; CAA57309." evidence="22" ref="4">
    <original>LCVSW</original>
    <variation>TCVCL</variation>
    <location>
        <begin position="1151"/>
        <end position="1155"/>
    </location>
</feature>
<feature type="sequence conflict" description="In Ref. 2; CAC83674." evidence="22" ref="2">
    <original>SW</original>
    <variation>CL</variation>
    <location>
        <begin position="1154"/>
        <end position="1155"/>
    </location>
</feature>
<feature type="sequence conflict" description="In Ref. 4; CAA57309." evidence="22" ref="4">
    <original>P</original>
    <variation>A</variation>
    <location>
        <position position="1480"/>
    </location>
</feature>
<feature type="sequence conflict" description="In Ref. 4; CAA57309." evidence="22" ref="4">
    <original>L</original>
    <variation>P</variation>
    <location>
        <position position="1683"/>
    </location>
</feature>
<feature type="sequence conflict" description="In Ref. 4; CAA57309." evidence="22" ref="4">
    <original>L</original>
    <variation>P</variation>
    <location>
        <position position="1738"/>
    </location>
</feature>
<feature type="sequence conflict" description="In Ref. 2; CAC83674 and 4; CAA57309." evidence="22" ref="2 4">
    <original>L</original>
    <variation>V</variation>
    <location>
        <position position="1790"/>
    </location>
</feature>
<feature type="sequence conflict" description="In Ref. 5; AA sequence." evidence="22" ref="5">
    <original>E</original>
    <variation>N</variation>
    <location>
        <position position="1803"/>
    </location>
</feature>
<feature type="sequence conflict" description="In Ref. 2; CAC83674." evidence="22" ref="2">
    <original>T</original>
    <variation>I</variation>
    <location>
        <position position="1874"/>
    </location>
</feature>
<feature type="sequence conflict" description="In Ref. 2; CAC83674." evidence="22" ref="2">
    <original>AD</original>
    <variation>GR</variation>
    <location>
        <begin position="2008"/>
        <end position="2009"/>
    </location>
</feature>
<feature type="sequence conflict" description="In Ref. 5; AA sequence." evidence="22" ref="5">
    <original>E</original>
    <variation>N</variation>
    <location>
        <position position="2176"/>
    </location>
</feature>
<feature type="sequence conflict" description="In Ref. 2; CAC83674." evidence="22" ref="2">
    <original>Y</original>
    <variation>I</variation>
    <location>
        <position position="2207"/>
    </location>
</feature>
<feature type="sequence conflict" description="In Ref. 2; CAC83674." evidence="22" ref="2">
    <original>T</original>
    <variation>I</variation>
    <location>
        <position position="2238"/>
    </location>
</feature>
<feature type="sequence conflict" description="In Ref. 2; CAC83674." evidence="22" ref="2">
    <location>
        <begin position="2289"/>
        <end position="4237"/>
    </location>
</feature>
<feature type="sequence conflict" description="In Ref. 2; CAC83675." evidence="22" ref="2">
    <original>S</original>
    <variation>T</variation>
    <location>
        <position position="3047"/>
    </location>
</feature>
<feature type="sequence conflict" description="In Ref. 2; CAC83676." evidence="22" ref="2">
    <original>A</original>
    <variation>S</variation>
    <location>
        <position position="3088"/>
    </location>
</feature>
<feature type="sequence conflict" description="In Ref. 2; CAC83676." evidence="22" ref="2">
    <original>AP</original>
    <variation>PL</variation>
    <location>
        <begin position="3095"/>
        <end position="3096"/>
    </location>
</feature>
<feature type="sequence conflict" description="In Ref. 2; CAC83676." evidence="22" ref="2">
    <original>T</original>
    <variation>I</variation>
    <location>
        <position position="3105"/>
    </location>
</feature>
<feature type="sequence conflict" description="In Ref. 2; CAC83676." evidence="22" ref="2">
    <location>
        <begin position="3107"/>
        <end position="4287"/>
    </location>
</feature>
<feature type="sequence conflict" description="In Ref. 2; CAC83675." evidence="22" ref="2">
    <original>I</original>
    <variation>V</variation>
    <location>
        <position position="3234"/>
    </location>
</feature>
<feature type="sequence conflict" description="In Ref. 2; CAC83675." evidence="22" ref="2">
    <original>G</original>
    <variation>S</variation>
    <location>
        <position position="3481"/>
    </location>
</feature>
<feature type="sequence conflict" description="In Ref. 2; CAC83675." evidence="22" ref="2">
    <original>E</original>
    <variation>Q</variation>
    <location>
        <position position="3562"/>
    </location>
</feature>
<feature type="sequence conflict" description="In Ref. 5; AA sequence." evidence="22" ref="5">
    <original>E</original>
    <variation>N</variation>
    <location>
        <position position="3580"/>
    </location>
</feature>
<feature type="sequence conflict" description="In Ref. 2; CAC83675." evidence="22" ref="2">
    <original>TPSGRATSP</original>
    <variation>PLVGEPPAQ</variation>
    <location>
        <begin position="3636"/>
        <end position="3644"/>
    </location>
</feature>
<feature type="sequence conflict" description="In Ref. 2; CAC83675." evidence="22" ref="2">
    <original>S</original>
    <variation>P</variation>
    <location>
        <position position="3817"/>
    </location>
</feature>
<feature type="sequence conflict" description="In Ref. 2; CAC83674." evidence="22" ref="2">
    <original>A</original>
    <variation>V</variation>
    <location>
        <position position="4244"/>
    </location>
</feature>
<feature type="sequence conflict" description="In Ref. 2; CAC83674." evidence="22" ref="2">
    <original>TSGPG</original>
    <variation>ISGPK</variation>
    <location>
        <begin position="4250"/>
        <end position="4254"/>
    </location>
</feature>
<feature type="sequence conflict" description="In Ref. 2; CAC83674." evidence="22" ref="2">
    <original>S</original>
    <variation>T</variation>
    <location>
        <position position="4262"/>
    </location>
</feature>
<feature type="sequence conflict" description="In Ref. 2; CAC83675." evidence="22" ref="2">
    <original>T</original>
    <variation>I</variation>
    <location>
        <position position="4265"/>
    </location>
</feature>
<feature type="sequence conflict" description="In Ref. 2; CAC83674." evidence="22" ref="2">
    <original>T</original>
    <variation>I</variation>
    <location>
        <position position="4274"/>
    </location>
</feature>
<feature type="sequence conflict" description="In Ref. 2; CAC83674." evidence="22" ref="2">
    <original>RTTSA</original>
    <variation>STTSV</variation>
    <location>
        <begin position="4280"/>
        <end position="4284"/>
    </location>
</feature>
<feature type="sequence conflict" description="In Ref. 2; CAC83674." evidence="22" ref="2">
    <location>
        <begin position="4286"/>
        <end position="4373"/>
    </location>
</feature>
<feature type="sequence conflict" description="In Ref. 2; CAC83676." evidence="22" ref="2">
    <original>T</original>
    <variation>P</variation>
    <location>
        <position position="4290"/>
    </location>
</feature>
<feature type="sequence conflict" description="In Ref. 2; CAC83676." evidence="22" ref="2">
    <location>
        <begin position="4314"/>
        <end position="4473"/>
    </location>
</feature>
<feature type="sequence conflict" description="In Ref. 2; CAC83674." evidence="22" ref="2">
    <original>P</original>
    <variation>L</variation>
    <location>
        <position position="4381"/>
    </location>
</feature>
<feature type="sequence conflict" description="In Ref. 2; CAC83674." evidence="22" ref="2">
    <original>TAS</original>
    <variation>PAG</variation>
    <location>
        <begin position="4398"/>
        <end position="4400"/>
    </location>
</feature>
<feature type="sequence conflict" description="In Ref. 2; CAC83674." evidence="22" ref="2">
    <original>S</original>
    <variation>N</variation>
    <location>
        <position position="4407"/>
    </location>
</feature>
<feature type="sequence conflict" description="In Ref. 2; CAC83674." evidence="22" ref="2">
    <original>T</original>
    <variation>I</variation>
    <location>
        <position position="4418"/>
    </location>
</feature>
<feature type="sequence conflict" description="In Ref. 2; CAC83674." evidence="22" ref="2">
    <location>
        <begin position="4421"/>
        <end position="4484"/>
    </location>
</feature>
<feature type="sequence conflict" description="In Ref. 2; CAC83674." evidence="22" ref="2">
    <original>T</original>
    <variation>I</variation>
    <location>
        <position position="4489"/>
    </location>
</feature>
<feature type="sequence conflict" description="In Ref. 2; CAC83674." evidence="22" ref="2">
    <original>STA</original>
    <variation>PTS</variation>
    <location>
        <begin position="4501"/>
        <end position="4503"/>
    </location>
</feature>
<feature type="sequence conflict" description="In Ref. 2; CAC83674." evidence="22" ref="2">
    <original>T</original>
    <variation>I</variation>
    <location>
        <position position="4521"/>
    </location>
</feature>
<feature type="sequence conflict" description="In Ref. 2; CAC83674." evidence="22" ref="2">
    <location>
        <begin position="4533"/>
        <end position="4572"/>
    </location>
</feature>
<feature type="sequence conflict" description="In Ref. 2; CAC83674." evidence="22" ref="2">
    <original>G</original>
    <variation>A</variation>
    <location>
        <position position="4588"/>
    </location>
</feature>
<feature type="sequence conflict" description="In Ref. 7; AAA18431." evidence="22" ref="7">
    <original>VS</original>
    <variation>HE</variation>
    <location>
        <begin position="4614"/>
        <end position="4615"/>
    </location>
</feature>
<feature type="sequence conflict" description="In Ref. 8; CAA88307." evidence="22" ref="8">
    <original>P</original>
    <variation>R</variation>
    <location>
        <position position="4827"/>
    </location>
</feature>
<feature type="sequence conflict" description="In Ref. 6; CAA04737/CAA04738 and 8; CAA88307." evidence="22" ref="6 8">
    <original>R</original>
    <variation>S</variation>
    <location>
        <position position="4884"/>
    </location>
</feature>
<feature type="sequence conflict" description="In Ref. 7; AAA18431." evidence="22" ref="7">
    <original>R</original>
    <variation>P</variation>
    <location>
        <position position="4886"/>
    </location>
</feature>
<feature type="sequence conflict" description="In Ref. 7; AAA18431." evidence="22" ref="7">
    <original>G</original>
    <variation>A</variation>
    <location>
        <position position="4899"/>
    </location>
</feature>
<feature type="sequence conflict" description="In Ref. 7; AAA18431." evidence="22" ref="7">
    <original>VL</original>
    <variation>AW</variation>
    <location>
        <begin position="4946"/>
        <end position="4947"/>
    </location>
</feature>
<feature type="sequence conflict" description="In Ref. 8; CAA88307." evidence="22" ref="8">
    <original>G</original>
    <variation>A</variation>
    <location>
        <position position="5013"/>
    </location>
</feature>
<feature type="sequence conflict" description="In Ref. 10; AAH33831." evidence="22" ref="10">
    <original>VVAS</original>
    <variation>HASA</variation>
    <location>
        <begin position="5081"/>
        <end position="5084"/>
    </location>
</feature>
<feature type="sequence conflict" description="In Ref. 8; CAA88307 and 7; AAA18431." evidence="22" ref="8 7">
    <original>Q</original>
    <variation>H</variation>
    <location>
        <position position="5148"/>
    </location>
</feature>
<feature type="sequence conflict" description="In Ref. 7; AAA18431." evidence="22" ref="7">
    <original>GH</original>
    <variation>RD</variation>
    <location>
        <begin position="5209"/>
        <end position="5210"/>
    </location>
</feature>
<feature type="sequence conflict" description="In Ref. 6; CAA04737/CAA04738 and 7; AAA18431." evidence="22" ref="6 7">
    <original>P</original>
    <variation>R</variation>
    <location>
        <position position="5245"/>
    </location>
</feature>
<feature type="sequence conflict" description="In Ref. 6; CAA04737/CAA04738." evidence="22" ref="6">
    <original>S</original>
    <variation>T</variation>
    <location>
        <position position="5264"/>
    </location>
</feature>
<feature type="sequence conflict" description="In Ref. 7; AAA18431." evidence="22" ref="7">
    <original>G</original>
    <variation>R</variation>
    <location>
        <position position="5356"/>
    </location>
</feature>
<feature type="sequence conflict" description="In Ref. 7; AAA18431." evidence="22" ref="7">
    <original>A</original>
    <variation>R</variation>
    <location>
        <position position="5363"/>
    </location>
</feature>
<feature type="sequence conflict" description="In Ref. 7; AAA18431." evidence="22" ref="7">
    <original>G</original>
    <variation>R</variation>
    <location>
        <position position="5433"/>
    </location>
</feature>
<feature type="sequence conflict" description="In Ref. 7; AAA18431." evidence="22" ref="7">
    <original>G</original>
    <variation>A</variation>
    <location>
        <position position="5441"/>
    </location>
</feature>
<feature type="sequence conflict" description="In Ref. 7; AAA18431." evidence="22" ref="7">
    <original>C</original>
    <variation>S</variation>
    <location>
        <position position="5546"/>
    </location>
</feature>
<feature type="sequence conflict" description="In Ref. 7; AAA18431." evidence="22" ref="7">
    <original>P</original>
    <variation>A</variation>
    <location>
        <position position="5622"/>
    </location>
</feature>
<feature type="strand" evidence="28">
    <location>
        <begin position="68"/>
        <end position="70"/>
    </location>
</feature>
<feature type="helix" evidence="28">
    <location>
        <begin position="77"/>
        <end position="79"/>
    </location>
</feature>
<feature type="strand" evidence="28">
    <location>
        <begin position="80"/>
        <end position="84"/>
    </location>
</feature>
<feature type="turn" evidence="28">
    <location>
        <begin position="85"/>
        <end position="87"/>
    </location>
</feature>
<feature type="strand" evidence="28">
    <location>
        <begin position="88"/>
        <end position="90"/>
    </location>
</feature>
<feature type="strand" evidence="28">
    <location>
        <begin position="96"/>
        <end position="98"/>
    </location>
</feature>
<feature type="strand" evidence="28">
    <location>
        <begin position="103"/>
        <end position="109"/>
    </location>
</feature>
<feature type="strand" evidence="28">
    <location>
        <begin position="112"/>
        <end position="115"/>
    </location>
</feature>
<feature type="strand" evidence="28">
    <location>
        <begin position="117"/>
        <end position="125"/>
    </location>
</feature>
<feature type="strand" evidence="28">
    <location>
        <begin position="132"/>
        <end position="140"/>
    </location>
</feature>
<feature type="strand" evidence="28">
    <location>
        <begin position="143"/>
        <end position="148"/>
    </location>
</feature>
<feature type="strand" evidence="28">
    <location>
        <begin position="151"/>
        <end position="154"/>
    </location>
</feature>
<feature type="strand" evidence="28">
    <location>
        <begin position="161"/>
        <end position="165"/>
    </location>
</feature>
<feature type="strand" evidence="28">
    <location>
        <begin position="168"/>
        <end position="172"/>
    </location>
</feature>
<feature type="strand" evidence="28">
    <location>
        <begin position="174"/>
        <end position="181"/>
    </location>
</feature>
<feature type="turn" evidence="28">
    <location>
        <begin position="182"/>
        <end position="184"/>
    </location>
</feature>
<feature type="strand" evidence="28">
    <location>
        <begin position="185"/>
        <end position="190"/>
    </location>
</feature>
<feature type="strand" evidence="28">
    <location>
        <begin position="195"/>
        <end position="199"/>
    </location>
</feature>
<feature type="helix" evidence="28">
    <location>
        <begin position="201"/>
        <end position="203"/>
    </location>
</feature>
<feature type="turn" evidence="28">
    <location>
        <begin position="220"/>
        <end position="222"/>
    </location>
</feature>
<feature type="strand" evidence="28">
    <location>
        <begin position="225"/>
        <end position="228"/>
    </location>
</feature>
<feature type="helix" evidence="28">
    <location>
        <begin position="232"/>
        <end position="237"/>
    </location>
</feature>
<feature type="helix" evidence="28">
    <location>
        <begin position="265"/>
        <end position="270"/>
    </location>
</feature>
<feature type="turn" evidence="28">
    <location>
        <begin position="277"/>
        <end position="281"/>
    </location>
</feature>
<feature type="helix" evidence="28">
    <location>
        <begin position="285"/>
        <end position="296"/>
    </location>
</feature>
<feature type="strand" evidence="28">
    <location>
        <begin position="299"/>
        <end position="301"/>
    </location>
</feature>
<feature type="helix" evidence="28">
    <location>
        <begin position="303"/>
        <end position="305"/>
    </location>
</feature>
<feature type="helix" evidence="28">
    <location>
        <begin position="308"/>
        <end position="320"/>
    </location>
</feature>
<feature type="strand" evidence="28">
    <location>
        <begin position="331"/>
        <end position="334"/>
    </location>
</feature>
<feature type="strand" evidence="28">
    <location>
        <begin position="343"/>
        <end position="348"/>
    </location>
</feature>
<feature type="strand" evidence="28">
    <location>
        <begin position="354"/>
        <end position="356"/>
    </location>
</feature>
<feature type="turn" evidence="28">
    <location>
        <begin position="358"/>
        <end position="362"/>
    </location>
</feature>
<feature type="strand" evidence="28">
    <location>
        <begin position="369"/>
        <end position="373"/>
    </location>
</feature>
<feature type="strand" evidence="28">
    <location>
        <begin position="378"/>
        <end position="380"/>
    </location>
</feature>
<feature type="turn" evidence="28">
    <location>
        <begin position="382"/>
        <end position="384"/>
    </location>
</feature>
<feature type="strand" evidence="28">
    <location>
        <begin position="387"/>
        <end position="390"/>
    </location>
</feature>
<feature type="helix" evidence="28">
    <location>
        <begin position="391"/>
        <end position="393"/>
    </location>
</feature>
<feature type="strand" evidence="28">
    <location>
        <begin position="408"/>
        <end position="410"/>
    </location>
</feature>
<feature type="strand" evidence="28">
    <location>
        <begin position="412"/>
        <end position="419"/>
    </location>
</feature>
<feature type="strand" evidence="28">
    <location>
        <begin position="422"/>
        <end position="427"/>
    </location>
</feature>
<feature type="strand" evidence="28">
    <location>
        <begin position="432"/>
        <end position="437"/>
    </location>
</feature>
<feature type="turn" evidence="28">
    <location>
        <begin position="438"/>
        <end position="440"/>
    </location>
</feature>
<feature type="strand" evidence="28">
    <location>
        <begin position="441"/>
        <end position="443"/>
    </location>
</feature>
<feature type="strand" evidence="28">
    <location>
        <begin position="449"/>
        <end position="451"/>
    </location>
</feature>
<feature type="strand" evidence="28">
    <location>
        <begin position="456"/>
        <end position="461"/>
    </location>
</feature>
<feature type="strand" evidence="28">
    <location>
        <begin position="463"/>
        <end position="465"/>
    </location>
</feature>
<feature type="strand" evidence="28">
    <location>
        <begin position="468"/>
        <end position="477"/>
    </location>
</feature>
<feature type="strand" evidence="28">
    <location>
        <begin position="479"/>
        <end position="481"/>
    </location>
</feature>
<feature type="strand" evidence="28">
    <location>
        <begin position="485"/>
        <end position="494"/>
    </location>
</feature>
<feature type="turn" evidence="28">
    <location>
        <begin position="495"/>
        <end position="498"/>
    </location>
</feature>
<feature type="strand" evidence="28">
    <location>
        <begin position="499"/>
        <end position="504"/>
    </location>
</feature>
<feature type="strand" evidence="28">
    <location>
        <begin position="509"/>
        <end position="511"/>
    </location>
</feature>
<feature type="strand" evidence="28">
    <location>
        <begin position="514"/>
        <end position="516"/>
    </location>
</feature>
<feature type="strand" evidence="28">
    <location>
        <begin position="520"/>
        <end position="522"/>
    </location>
</feature>
<feature type="strand" evidence="28">
    <location>
        <begin position="525"/>
        <end position="528"/>
    </location>
</feature>
<feature type="strand" evidence="28">
    <location>
        <begin position="530"/>
        <end position="539"/>
    </location>
</feature>
<feature type="strand" evidence="28">
    <location>
        <begin position="542"/>
        <end position="548"/>
    </location>
</feature>
<feature type="strand" evidence="28">
    <location>
        <begin position="550"/>
        <end position="552"/>
    </location>
</feature>
<feature type="strand" evidence="28">
    <location>
        <begin position="554"/>
        <end position="559"/>
    </location>
</feature>
<feature type="helix" evidence="28">
    <location>
        <begin position="561"/>
        <end position="563"/>
    </location>
</feature>
<feature type="turn" evidence="28">
    <location>
        <begin position="564"/>
        <end position="566"/>
    </location>
</feature>
<feature type="helix" evidence="28">
    <location>
        <begin position="579"/>
        <end position="582"/>
    </location>
</feature>
<feature type="helix" evidence="28">
    <location>
        <begin position="593"/>
        <end position="597"/>
    </location>
</feature>
<feature type="helix" evidence="28">
    <location>
        <begin position="598"/>
        <end position="600"/>
    </location>
</feature>
<feature type="helix" evidence="28">
    <location>
        <begin position="616"/>
        <end position="619"/>
    </location>
</feature>
<feature type="helix" evidence="28">
    <location>
        <begin position="621"/>
        <end position="631"/>
    </location>
</feature>
<feature type="turn" evidence="28">
    <location>
        <begin position="632"/>
        <end position="635"/>
    </location>
</feature>
<feature type="helix" evidence="28">
    <location>
        <begin position="642"/>
        <end position="644"/>
    </location>
</feature>
<feature type="turn" evidence="28">
    <location>
        <begin position="645"/>
        <end position="647"/>
    </location>
</feature>
<feature type="helix" evidence="28">
    <location>
        <begin position="651"/>
        <end position="663"/>
    </location>
</feature>
<feature type="strand" evidence="28">
    <location>
        <begin position="664"/>
        <end position="666"/>
    </location>
</feature>
<feature type="helix" evidence="28">
    <location>
        <begin position="667"/>
        <end position="685"/>
    </location>
</feature>
<feature type="turn" evidence="28">
    <location>
        <begin position="690"/>
        <end position="693"/>
    </location>
</feature>
<feature type="strand" evidence="28">
    <location>
        <begin position="694"/>
        <end position="697"/>
    </location>
</feature>
<feature type="helix" evidence="28">
    <location>
        <begin position="699"/>
        <end position="702"/>
    </location>
</feature>
<feature type="strand" evidence="28">
    <location>
        <begin position="709"/>
        <end position="714"/>
    </location>
</feature>
<feature type="helix" evidence="28">
    <location>
        <begin position="721"/>
        <end position="726"/>
    </location>
</feature>
<feature type="strand" evidence="28">
    <location>
        <begin position="738"/>
        <end position="742"/>
    </location>
</feature>
<feature type="strand" evidence="28">
    <location>
        <begin position="748"/>
        <end position="750"/>
    </location>
</feature>
<feature type="turn" evidence="28">
    <location>
        <begin position="751"/>
        <end position="753"/>
    </location>
</feature>
<feature type="strand" evidence="28">
    <location>
        <begin position="754"/>
        <end position="756"/>
    </location>
</feature>
<feature type="turn" evidence="28">
    <location>
        <begin position="758"/>
        <end position="760"/>
    </location>
</feature>
<feature type="strand" evidence="28">
    <location>
        <begin position="775"/>
        <end position="778"/>
    </location>
</feature>
<feature type="strand" evidence="28">
    <location>
        <begin position="781"/>
        <end position="786"/>
    </location>
</feature>
<feature type="strand" evidence="28">
    <location>
        <begin position="789"/>
        <end position="792"/>
    </location>
</feature>
<feature type="strand" evidence="28">
    <location>
        <begin position="807"/>
        <end position="809"/>
    </location>
</feature>
<feature type="turn" evidence="28">
    <location>
        <begin position="821"/>
        <end position="823"/>
    </location>
</feature>
<feature type="strand" evidence="28">
    <location>
        <begin position="826"/>
        <end position="828"/>
    </location>
</feature>
<feature type="strand" evidence="28">
    <location>
        <begin position="842"/>
        <end position="844"/>
    </location>
</feature>
<feature type="strand" evidence="28">
    <location>
        <begin position="853"/>
        <end position="855"/>
    </location>
</feature>
<feature type="helix" evidence="28">
    <location>
        <begin position="860"/>
        <end position="862"/>
    </location>
</feature>
<feature type="strand" evidence="28">
    <location>
        <begin position="877"/>
        <end position="880"/>
    </location>
</feature>
<feature type="strand" evidence="28">
    <location>
        <begin position="883"/>
        <end position="888"/>
    </location>
</feature>
<feature type="strand" evidence="28">
    <location>
        <begin position="891"/>
        <end position="894"/>
    </location>
</feature>
<feature type="strand" evidence="28">
    <location>
        <begin position="901"/>
        <end position="906"/>
    </location>
</feature>
<feature type="turn" evidence="28">
    <location>
        <begin position="907"/>
        <end position="909"/>
    </location>
</feature>
<feature type="strand" evidence="28">
    <location>
        <begin position="910"/>
        <end position="912"/>
    </location>
</feature>
<feature type="strand" evidence="28">
    <location>
        <begin position="918"/>
        <end position="920"/>
    </location>
</feature>
<feature type="strand" evidence="28">
    <location>
        <begin position="924"/>
        <end position="932"/>
    </location>
</feature>
<feature type="strand" evidence="28">
    <location>
        <begin position="935"/>
        <end position="937"/>
    </location>
</feature>
<feature type="strand" evidence="28">
    <location>
        <begin position="944"/>
        <end position="952"/>
    </location>
</feature>
<feature type="strand" evidence="28">
    <location>
        <begin position="954"/>
        <end position="957"/>
    </location>
</feature>
<feature type="strand" evidence="28">
    <location>
        <begin position="959"/>
        <end position="968"/>
    </location>
</feature>
<feature type="strand" evidence="28">
    <location>
        <begin position="971"/>
        <end position="976"/>
    </location>
</feature>
<feature type="strand" evidence="28">
    <location>
        <begin position="979"/>
        <end position="982"/>
    </location>
</feature>
<feature type="strand" evidence="28">
    <location>
        <begin position="994"/>
        <end position="998"/>
    </location>
</feature>
<feature type="strand" evidence="28">
    <location>
        <begin position="1001"/>
        <end position="1005"/>
    </location>
</feature>
<feature type="strand" evidence="28">
    <location>
        <begin position="1009"/>
        <end position="1014"/>
    </location>
</feature>
<feature type="strand" evidence="28">
    <location>
        <begin position="1016"/>
        <end position="1018"/>
    </location>
</feature>
<feature type="strand" evidence="28">
    <location>
        <begin position="1020"/>
        <end position="1024"/>
    </location>
</feature>
<feature type="helix" evidence="28">
    <location>
        <begin position="1026"/>
        <end position="1028"/>
    </location>
</feature>
<feature type="strand" evidence="28">
    <location>
        <begin position="1031"/>
        <end position="1034"/>
    </location>
</feature>
<feature type="helix" evidence="28">
    <location>
        <begin position="1044"/>
        <end position="1046"/>
    </location>
</feature>
<feature type="helix" evidence="28">
    <location>
        <begin position="1058"/>
        <end position="1063"/>
    </location>
</feature>
<feature type="helix" evidence="28">
    <location>
        <begin position="1080"/>
        <end position="1083"/>
    </location>
</feature>
<feature type="helix" evidence="28">
    <location>
        <begin position="1085"/>
        <end position="1094"/>
    </location>
</feature>
<feature type="helix" evidence="28">
    <location>
        <begin position="1095"/>
        <end position="1098"/>
    </location>
</feature>
<feature type="helix" evidence="28">
    <location>
        <begin position="1104"/>
        <end position="1106"/>
    </location>
</feature>
<feature type="turn" evidence="28">
    <location>
        <begin position="1107"/>
        <end position="1109"/>
    </location>
</feature>
<feature type="helix" evidence="28">
    <location>
        <begin position="1113"/>
        <end position="1125"/>
    </location>
</feature>
<feature type="helix" evidence="28">
    <location>
        <begin position="1131"/>
        <end position="1148"/>
    </location>
</feature>
<feature type="strand" evidence="28">
    <location>
        <begin position="1158"/>
        <end position="1161"/>
    </location>
</feature>
<feature type="helix" evidence="28">
    <location>
        <begin position="1165"/>
        <end position="1168"/>
    </location>
</feature>
<feature type="strand" evidence="28">
    <location>
        <begin position="1176"/>
        <end position="1181"/>
    </location>
</feature>
<feature type="strand" evidence="28">
    <location>
        <begin position="1188"/>
        <end position="1190"/>
    </location>
</feature>
<feature type="strand" evidence="28">
    <location>
        <begin position="1205"/>
        <end position="1208"/>
    </location>
</feature>
<feature type="strand" evidence="28">
    <location>
        <begin position="1212"/>
        <end position="1214"/>
    </location>
</feature>
<feature type="strand" evidence="28">
    <location>
        <begin position="1216"/>
        <end position="1218"/>
    </location>
</feature>
<feature type="turn" evidence="28">
    <location>
        <begin position="1219"/>
        <end position="1222"/>
    </location>
</feature>
<feature type="strand" evidence="28">
    <location>
        <begin position="1223"/>
        <end position="1226"/>
    </location>
</feature>
<feature type="strand" evidence="27">
    <location>
        <begin position="3523"/>
        <end position="3526"/>
    </location>
</feature>
<feature type="strand" evidence="27">
    <location>
        <begin position="3542"/>
        <end position="3546"/>
    </location>
</feature>
<feature type="helix" evidence="27">
    <location>
        <begin position="3547"/>
        <end position="3552"/>
    </location>
</feature>
<feature type="strand" evidence="27">
    <location>
        <begin position="3563"/>
        <end position="3571"/>
    </location>
</feature>
<feature type="helix" evidence="27">
    <location>
        <begin position="3579"/>
        <end position="3582"/>
    </location>
</feature>
<feature type="strand" evidence="27">
    <location>
        <begin position="3586"/>
        <end position="3589"/>
    </location>
</feature>
<feature type="turn" evidence="27">
    <location>
        <begin position="3590"/>
        <end position="3592"/>
    </location>
</feature>
<feature type="strand" evidence="27">
    <location>
        <begin position="3593"/>
        <end position="3597"/>
    </location>
</feature>
<feature type="helix" evidence="27">
    <location>
        <begin position="3598"/>
        <end position="3600"/>
    </location>
</feature>
<feature type="strand" evidence="27">
    <location>
        <begin position="3603"/>
        <end position="3605"/>
    </location>
</feature>
<feature type="strand" evidence="27">
    <location>
        <begin position="3611"/>
        <end position="3619"/>
    </location>
</feature>
<proteinExistence type="evidence at protein level"/>
<gene>
    <name evidence="16 23" type="primary">MUC5AC</name>
    <name evidence="20" type="synonym">MUC5</name>
</gene>
<name>MUC5A_HUMAN</name>
<keyword id="KW-0002">3D-structure</keyword>
<keyword id="KW-0186">Copper</keyword>
<keyword id="KW-0903">Direct protein sequencing</keyword>
<keyword id="KW-1015">Disulfide bond</keyword>
<keyword id="KW-0325">Glycoprotein</keyword>
<keyword id="KW-0479">Metal-binding</keyword>
<keyword id="KW-1267">Proteomics identification</keyword>
<keyword id="KW-1185">Reference proteome</keyword>
<keyword id="KW-0677">Repeat</keyword>
<keyword id="KW-0964">Secreted</keyword>
<keyword id="KW-0732">Signal</keyword>
<organism>
    <name type="scientific">Homo sapiens</name>
    <name type="common">Human</name>
    <dbReference type="NCBI Taxonomy" id="9606"/>
    <lineage>
        <taxon>Eukaryota</taxon>
        <taxon>Metazoa</taxon>
        <taxon>Chordata</taxon>
        <taxon>Craniata</taxon>
        <taxon>Vertebrata</taxon>
        <taxon>Euteleostomi</taxon>
        <taxon>Mammalia</taxon>
        <taxon>Eutheria</taxon>
        <taxon>Euarchontoglires</taxon>
        <taxon>Primates</taxon>
        <taxon>Haplorrhini</taxon>
        <taxon>Catarrhini</taxon>
        <taxon>Hominidae</taxon>
        <taxon>Homo</taxon>
    </lineage>
</organism>
<accession>P98088</accession>
<accession>A0A096LPK4</accession>
<accession>O60460</accession>
<accession>O76065</accession>
<accession>Q13792</accession>
<accession>Q14425</accession>
<accession>Q658Q1</accession>
<accession>Q7M4S5</accession>
<accession>Q8N4M9</accession>
<accession>Q8WWQ3</accession>
<accession>Q8WWQ4</accession>
<accession>Q8WWQ5</accession>
<sequence>MSVGRRKLALLWALALALACTRHTGHAQDGSSESSYKHHPALSPIARGPSGVPLRGATVFPSLRTIPVVRASNPAHNGRVCSTWGSFHYKTFDGDVFRFPGLCNYVFSEHCGAAYEDFNIQLRRSQESAAPTLSRVLMKVDGVVIQLTKGSVLVNGHPVLLPFSQSGVLIQQSSSYTKVEARLGLVLMWNHDDSLLLELDTKYANKTCGLCGDFNGMPVVSELLSHNTKLTPMEFGNLQKMDDPTDQCQDPVPEPPRNCSTGFGICEELLHGQLFSGCVALVDVGSYLEACRQDLCFCEDTDLLSCVCHTLAEYSRQCTHAGGLPQDWRGPDFCPQKCPNNMQYHECRSPCADTCSNQEHSRACEDHCVAGCFCPEGTVLDDIGQTGCVPVSKCACVYNGAAYAPGATYSTDCTNCTCSGGRWSCQEVPCPGTCSVLGGAHFSTFDGKQYTVHGDCSYVLTKPCDSSAFTVLAELRRCGLTDSETCLKSVTLSLDGAQTVVVIKASGEVFLNQIYTQLPISAANVTIFRPSTFFIIAQTSLGLQLNLQLVPTMQLFMQLAPKLRGQTCGLCGNFNSIQADDFRTLSGVVEATAAAFFNTFKTQAACPNIRNSFEDPCSLSVENEKYAQHWCSQLTDADGPFGRCHAAVKPGTYYSNCMFDTCNCERSEDCLCAALSSYVHACAAKGVQLGGWRDGVCTKPMTTCPKSMTYHYHVSTCQPTCRSLSEGDITCSVGFIPVDGCICPKGTFLDDTGKCVQASNCPCYHRGSMIPNGESVHDSGAICTCTHGKLSCIGGQAPAPVCAAPMVFFDCRNATPGDTGAGCQKSCHTLDMTCYSPQCVPGCVCPDGLVADGEGGCITAEDCPCVHNEASYRAGQTIRVGCNTCTCDSRMWRCTDDPCLATCAVYGDGHYLTFDGQSYSFNGDCEYTLVQNHCGGKDSTQDSFRVVTENVPCGTTGTTCSKAIKIFLGGFELKLSHGKVEVIGTDESQEVPYTIRQMGIYLVVDTDIGLVLLWDKKTSIFINLSPEFKGRVCGLCGNFDDIAVNDFATRSRSVVGDVLEFGNSWKLSPSCPDALAPKDPCTANPFRKSWAQKQCSILHGPTFAACHAHVEPARYYEACVNDACACDSGGDCECFCTAVAAYAQACHEVGLCVSWRTPSICPLFCDYYNPEGQCEWHYQPCGVPCLRTCRNPRGDCLRDVRGLEGCYPKCPPEAPIFDEDKMQCVATCPTPPLPPRCHVHGKSYRPGAVVPSDKNCQSCLCTERGVECTYKAEACVCTYNGQRFHPGDVIYHTTDGTGGCISARCGANGTIERRVYPCSPTTPVPPTTFSFSTPPLVVSSTHTPSNGPSSAHTGPPSSAWPTTAGTSPRTRLPTASASLPPVCGEKCLWSPWMDVSRPGRGTDSGDFDTLENLRAHGYRVCESPRSVECRAEDAPGVPLRALGQRVQCSPDVGLTCRNREQASGLCYNYQIRVQCCTPLPCSTSSSPAQTTPPTTSKTTETRASGSSAPSSTPGTVSLSTARTTPAPGTATSVKKTFSTPSPPPVPATSTSSMSTTAPGTSVVSSKPTPTEPSTSSCLQELCTWTEWIDGSYPAPGINGGDFDTFQNLRDEGYTFCESPRSVQCRAESFPNTPLADLGQDVICSHTEGLICLNKNQLPPICYNYEIRIQCCETVNVCRDITRLPKTVATTRPTPHPTGAQTQTTFTTHMPSASTEQPTATSRGGPTATSVTQGTHTTLVTRNCHPRCTWTKWFDVDFPSPGPHGGDKETYNNIIRSGEKICRRPEEITRLQCRAKSHPEVSIEHLGQVVQCSREEGLVCRNQDQQGPFKMCLNYEVRVLCCETPRGCHMTSTPGSTSSSPAQTTPSTTSKTTETQASGSSAPSSTPGTVSLSTARTTPAPGTATSVKKTFSTPSPPPVPATSTSSMSTTAPGTSVVSSKPTPTEPSTSSCLQELCTWTEWIDGSYPAPGINGGDFDTFQNLRDEGYTFCESPRSVQCRAESFPNTPLADLGQDVICSHTEGLICLNKNQLPPICYNYEIRIQCCETVNVCRDITRPPKTVATTRPTPHPTGAQTQTTFTTHMPSASTEQPTATSRGGPTATSVTQGTHTTPVTRNCHPRCTWTTWFDVDFPSPGPHGGDKETYNNIIRSGEKICRRPEEITRLQCRAKSHPEVSIEHLGQVVQCSREEGLVCRNQDQQGPFKMCLNYEVRVLCCETPKGCPVTSTPVTAPSTPSGRATSPTQSTSSWQKSRTTTLVTTSTTSTPQTSTTYAHTTSTTSAPTARTTSAPTTRTTSASPASTTSGPGNTPSPVPTTSTISAPTTSITSAPTTSTTSAPTSSTTSGPGTTPSPVPTTSITSAPTTSTTSAPTTSTTSARTSSTTSATTTSRISGPETTPSPVPTTSTTSATTTSTTSAPTTSTTSAPTSSTTSSPQTSTTSAPTTSTTSGPGTTPSPVPTTSTTSAPTTRTTSAPKSSTTSAATTSTTSGPETTPRPVPTTSTTSSPTTSTTSAPTTSTTSASTTSTTSGAGTTPSPVPTTSTTSAPTTSTTSAPISSTTSATTTSTTSGPGTTPSPVPTTSTTSAPTTSTTSGPGTTPSAVPTTSITSAPTTSTNSAPISSTTSATTTSRISGPETTPSPVPTASTTSASTTSTTSGPGTTPSPVPTTSTISVPTTSTTSASTTSTTSASTTSTTSGPGTTPSPVPTTSTTSAPTTSTTSAPTTSTISAPTTSTTSATTTSTTSAPTPRRTSAPTTSTISASTTSTTSATTTSTTSATTTSTISAPTTSTTLSPTTSTTSTTITSTTSAPISSTTSTPQTSTTSAPTTSTTSGPGTTSSPVPTTSTTSAPTTSTTSAPTTRTTSVPTSSTTSTATTSTTSGPGTTPSPVPTTSTTSAPTTRTTSAPTTSTTSAPTTSTTSAPTSSTTSATTTSTISVPTTSTTSVPGTTPSPVPTTSTISVPTTSTTSASTTSTTSGPGTTPSPVPTTSTTSAPTTSTTSAPTTSTISAPTTSTPSAPTTSTTLAPTTSTTSAPTTSTTSTPTSSTTSSPQTSTTSASTTSITSGPGTTPSPVPTTSTTSAPTTSTTSAATTSTISAPTTSTTSAPTTSTTSASTASKTSGLGTTPSPIPTTSTTSPPTTSTTSASTASKTSGPGTTPSPVPTTSTIFAPRTSTTSASTTSTTPGPGTTPSPVPTTSTASVSKTSTSHVSISKTTHSQPVTRDCHLRCTWTKWFDIDFPSPGPHGGDKETYNNIIRSGEKICRRPEEITRLQCRAESHPEVSIEHLGQVVQCSREEGLVCRNQDQQGPFKMCLNYEVRVLCCETPKGCPVTSTPVTAPSTPSGRATSPTQSTSSWQKSRTTTLVTTSTTSTPQTSTTSAPTTSTTSAPTTSTTSAPTTSTTSTPQTSISSAPTSSTTSAPTSSTISARTTSIISAPTTSTTSSPTTSTTSATTTSTTSAPTSSTTSTPQTSKTSAATSSTTSGSGTTPSPVTTTSTASVSKTSTSHVSVSKTTHSQPVTRDCHPRCTWTKWFDVDFPSPGPHGGDKETYNNIIRSGEKICRRPEEITRLQCRAKSHPEVSIEHLGQVVQCSREEGLVCRNQDQQGPFKMCLNYEVRVLCCETPKGCPVTSTSVTAPSTPSGRATSPTQSTSSWQKSRTTTLVTSSITSTTQTSTTSAPTTSTTPASIPSTTSAPTTSTTSAPTTSTTSAPTTSTTSTPQTTTSSAPTSSTTSAPTTSTISAPTTSTISAPTTSTTSAPTASTTSAPTSTSSAPTTNTTSAPTTSTTSAPITSTISAPTTSTTSTPQTSTISSPTTSTTSTPQTSTTSSPTTSTTSAPTTSTTSAPTTSTTSTPQTSISSAPTSSTTSAPTASTISAPTTSTTSFHTTSTTSPPTSSTSSTPQTSKTSAATSSTTSGSGTTPSPVPTTSTASVSKTSTSHVSVSKTTHSQPVTRDCHPRCTWTKWFDVDFPSPGPHGGDKETYNNIIRSGEKICRRPEEITRLQCRAESHPEVSIEHLGQVVQCSREEGLVCRNQDQQGPFKMCLNYEVRVLCCETPKGCPVTSTPVTAPSTPSGRATSPTQSTSSWQKSRTTTLVTTSTTSTPQTSTTSAPTTSTIPASTPSTTSAPTTSTTSAPTTSTTSAPTHRTTSGPTTSTTLAPTTSTTSAPTTSTNSAPTTSTISASTTSTISAPTTSTISSPTSSTTSTPQTSKTSAATSSTTSGSGTTPSPVPTTSTTSASTTSTTSAPTTSTTSGPGTTPSPVPSTSTTSAATTSTTSAPTTRTTSAPTSSMTSGPGTTPSPVPTTSTTSAPTTSTTSGPGTTPSPVPTTSTTSAPITSTTSGPGSTPSPVPTTSTTSAPTTSTTSASTASTTSGPGTTPSPVPTTSTTSAPTTRTTSASTASTTSGPGSTPSPVPTTSTTSAPTTRTTPASTASTTSGPGTTPSPVPTTSTTSASTTSTISLPTTSTTSAPITSMTSGPGTTPSPVPTTSTTSAPTTSTTSASTASTTSGPGTTPSPVPTTSTTSAPTTSTTSASTASTTSGPGTSLSPVPTTSTTSAPTTSTTSGPGTTPSPVPTTSTTSAPTTSTTSGPGTTPSPVPTTSTTPVSKTSTSHLSVSKTTHSQPVTSDCHPLCAWTKWFDVDFPSPGPHGGDKETYNNIIRSGEKICRRPEEITRLQCRAESHPEVNIEHLGQVVQCSREEGLVCRNQDQQGPFKMCLNYEVRVLCCETPRGCPVTSVTPYGTSPTNALYPSLSTSMVSASVASTSVASSSVASSSVAYSTQTCFCNVADRLYPAGSTIYRHRDLAGHCYYALCSQDCQVVRGVDSDCPSTTLPPAPATSPSISTSEPVTELGCPNAVPPRKKGETWATPNCSEATCEGNNVISLRPRTCPRVEKPTCANGYPAVKVADQDGCCHHYQCQCVCSGWGDPHYITFDGTYYTFLDNCTYVLVQQIVPVYGHFRVLVDNYFCGAEDGLSCPRSIILEYHQDRVVLTRKPVHGVMTNEIIFNNKVVSPGFRKNGIVVSRIGVKMYATIPELGVQVMFSGLIFSVEVPFSKFANNTEGQCGTCTNDRKDECRTPRGTVVASCSEMSGLWNVSIPDQPACHRPHPTPTTVGPTTVGSTTVGPTTVGSTTVGPTTPPAPCLPSPICQLILSKVFEPCHTVIPPLLFYEGCVFDRCHMTDLDVVCSSLELYAALCASHDICIDWRGRTGHMCPFTCPADKVYQPCGPSNPSYCYGNDSASLGALPEAGPITEGCFCPEGMTLFSTSAQVCVPTGCPRCLGPHGEPVKVGHTVGMDCQECTCEAATWTLTCRPKLCPLPPACPLPGFVPVPAAPQAGQCCPQYSCACNTSRCPAPVGCPEGARAIPTYQEGACCPVQNCSWTVCSINGTLYQPGAVVSSSLCETCRCELPGGPPSDAFVVSCETQICNTHCPVGFEYQEQSGQCCGTCVQVACVTNTSKSPAHLFYPGETWSDAGNHCVTHQCEKHQDGLVVVTTKKACPPLSCSLDEARMSKDGCCRFCPPPPPPYQNQSTCAVYHRSLIIQQQGCSSSEPVRLAYCRGNCGDSSSMYSLEGNTVEHRCQCCQELRTSLRNVTLHCTDGSSRAFSYTEVEECGCMGRRCPAPGDTQHSEEAEPEPSQEAESGSWERGVPVSPMH</sequence>
<protein>
    <recommendedName>
        <fullName evidence="22">Mucin-5AC</fullName>
        <shortName evidence="22">MUC-5AC</shortName>
    </recommendedName>
    <alternativeName>
        <fullName evidence="21">Gastric mucin</fullName>
    </alternativeName>
    <alternativeName>
        <fullName evidence="20">Major airway glycoprotein</fullName>
    </alternativeName>
    <alternativeName>
        <fullName>Mucin-5 subtype AC, tracheobronchial</fullName>
    </alternativeName>
    <alternativeName>
        <fullName evidence="19">Tracheobronchial mucin</fullName>
        <shortName evidence="20">TBM</shortName>
    </alternativeName>
</protein>
<comment type="function">
    <text evidence="8 17 18">Gel-forming glycoprotein of gastric and respiratory tract epithelia that protects the mucosa from infection and chemical damage by binding to inhaled microorganisms and particles that are subsequently removed by the mucociliary system (PubMed:14535999, PubMed:14718370). Interacts with H.pylori in the gastric epithelium, Barrett's esophagus as well as in gastric metaplasia of the duodenum (GMD) (PubMed:14535999).</text>
</comment>
<comment type="subunit">
    <text evidence="1 2 9">Homomultimer; disulfide-linked (PubMed:14718370). The N- and C-terminus mediate their assembly into higher order structures to form filaments (By similarity). The CTCK domains of two polypeptides associate in the endoplasmic reticulum to generate intermolecularly disulfide-bonded dimers (By similarity). These dimers progress to the Golgi apparatus, which is a more acidic environment than the endoplasmic reticulum. Under acidic conditions, the N-termini form non-covalent intermolecular interactions that juxtapose assemblies from different CTCK-linked dimers to produce long, disulfide-linked polymers that remain highly compact until secretion (By similarity).</text>
</comment>
<comment type="subcellular location">
    <subcellularLocation>
        <location evidence="9 13">Secreted</location>
    </subcellularLocation>
</comment>
<comment type="tissue specificity">
    <text evidence="8 14">Highly expressed in surface mucosal cells of respiratory tract and stomach epithelia. Overexpressed in a number of carcinomas. Also expressed in Barrett's esophagus epithelium and in the proximal duodenum.</text>
</comment>
<comment type="developmental stage">
    <text evidence="13">In airway epithelial cells, expression increases significantly during cell differentiation (at protein level).</text>
</comment>
<comment type="induction">
    <text evidence="13">By IL4.</text>
</comment>
<comment type="domain">
    <text>The cysteine residues in the Cys-rich subdomain repeats are not involved in disulfide bonding.</text>
</comment>
<comment type="domain">
    <text evidence="2">The CTCK domain mediates interchain disulfide bonds with another molecule of MUC5AC.</text>
</comment>
<comment type="PTM">
    <text evidence="8 9 12">C-, O- and N-glycosylated (PubMed:14718370). O-glycosylated on the second and last Thr of the Thr-/Ser-rich tandem repeats TTPSPVPTTSTTSA (PubMed:14718370, PubMed:22186971, PubMed:25939779). One form of glycosylation is also known as Lewis B (LeB) blood group antigen, a tetrasaccharide consisting of N-acetylglucosamine having a fucosyl residue attached (PubMed:14535999). It has a role as an epitope and antigen and functions as a receptor for H.pylori binding and facilitates infection (PubMed:14535999). C-mannosylation in the Cys-rich subdomains may be required for proper folding of these regions and for export from the endoplasmic reticulum during biosynthesis (PubMed:14718370).</text>
</comment>
<comment type="PTM">
    <text evidence="11">Proteolytic cleavage in the C-terminal is initiated early in the secretory pathway and does not involve a serine protease. The extent of cleavage is increased in the acidic parts of the secretory pathway. Cleavage generates a reactive group which could link the protein to a primary amide.</text>
</comment>
<comment type="sequence caution" evidence="22">
    <conflict type="erroneous termination">
        <sequence resource="EMBL-CDS" id="AAA18431"/>
    </conflict>
    <text>Truncated C-terminus.</text>
</comment>
<comment type="sequence caution" evidence="22">
    <conflict type="frameshift">
        <sequence resource="EMBL-CDS" id="AAA18431"/>
    </conflict>
</comment>
<comment type="sequence caution" evidence="22">
    <conflict type="frameshift">
        <sequence resource="EMBL-CDS" id="AAC15950"/>
    </conflict>
</comment>
<comment type="sequence caution" evidence="22">
    <conflict type="frameshift">
        <sequence resource="EMBL-CDS" id="CAA88307"/>
    </conflict>
</comment>
<comment type="sequence caution" evidence="22">
    <conflict type="frameshift">
        <sequence resource="EMBL-CDS" id="CAH56330"/>
    </conflict>
</comment>
<comment type="online information" name="Mucin database">
    <link uri="http://www.medkem.gu.se/mucinbiology/databases/"/>
</comment>
<comment type="online information" name="Atlas of Genetics and Cytogenetics in Oncology and Haematology">
    <link uri="https://atlasgeneticsoncology.org/gene/41460/MUC5AC"/>
</comment>